<gene>
    <name evidence="38 42" type="primary">ATG4B</name>
    <name evidence="38" type="synonym">APG4B</name>
    <name evidence="42" type="synonym">AUTL1</name>
    <name evidence="35" type="synonym">KIAA0943</name>
</gene>
<proteinExistence type="evidence at protein level"/>
<accession>Q9Y4P1</accession>
<accession>B7WNK2</accession>
<accession>Q53NU4</accession>
<accession>Q6ZUV8</accession>
<accession>Q8WYM9</accession>
<accession>Q96K07</accession>
<accession>Q96K96</accession>
<accession>Q96SZ1</accession>
<accession>Q9Y2F2</accession>
<reference key="1">
    <citation type="journal article" date="2003" name="J. Biol. Chem.">
        <title>Human autophagins, a family of cysteine proteinases potentially implicated in cell degradation by autophagy.</title>
        <authorList>
            <person name="Marino G."/>
            <person name="Uria J.A."/>
            <person name="Puente X.S."/>
            <person name="Quesada V."/>
            <person name="Bordallo J."/>
            <person name="Lopez-Otin C."/>
        </authorList>
    </citation>
    <scope>RETRACTED PAPER</scope>
    <source>
        <tissue>Liver</tissue>
    </source>
</reference>
<reference key="2">
    <citation type="journal article" date="2019" name="J. Biol. Chem.">
        <authorList>
            <person name="Marino G."/>
            <person name="Uria J.A."/>
            <person name="Puente X.S."/>
            <person name="Quesada V."/>
            <person name="Bordallo J."/>
            <person name="Lopez-Otin C."/>
        </authorList>
    </citation>
    <scope>RETRACTION NOTICE OF PUBMED:12446702</scope>
</reference>
<reference key="3">
    <citation type="journal article" date="2004" name="J. Cell Sci.">
        <title>LC3, GABARAP and GATE16 localize to autophagosomal membrane depending on form-II formation.</title>
        <authorList>
            <person name="Kabeya Y."/>
            <person name="Mizushima N."/>
            <person name="Yamamoto A."/>
            <person name="Oshitani-Okamoto S."/>
            <person name="Ohsumi Y."/>
            <person name="Yoshimori T."/>
        </authorList>
    </citation>
    <scope>NUCLEOTIDE SEQUENCE [MRNA] (ISOFORM 1)</scope>
    <scope>FUNCTION IN GABARAPL2; GABARAP AND MAP1LC3A CLEAVAGE</scope>
    <scope>ACTIVE SITE</scope>
    <scope>MUTAGENESIS OF CYS-74</scope>
    <scope>VARIANT GLN-354</scope>
</reference>
<reference key="4">
    <citation type="journal article" date="1999" name="DNA Res.">
        <title>Prediction of the coding sequences of unidentified human genes. XIII. The complete sequences of 100 new cDNA clones from brain which code for large proteins in vitro.</title>
        <authorList>
            <person name="Nagase T."/>
            <person name="Ishikawa K."/>
            <person name="Suyama M."/>
            <person name="Kikuno R."/>
            <person name="Hirosawa M."/>
            <person name="Miyajima N."/>
            <person name="Tanaka A."/>
            <person name="Kotani H."/>
            <person name="Nomura N."/>
            <person name="Ohara O."/>
        </authorList>
    </citation>
    <scope>NUCLEOTIDE SEQUENCE [LARGE SCALE MRNA] (ISOFORM 1)</scope>
    <scope>VARIANT GLN-354</scope>
    <source>
        <tissue>Brain</tissue>
    </source>
</reference>
<reference key="5">
    <citation type="submission" date="2005-08" db="EMBL/GenBank/DDBJ databases">
        <authorList>
            <person name="Ohara O."/>
            <person name="Nagase T."/>
            <person name="Kikuno R."/>
        </authorList>
    </citation>
    <scope>SEQUENCE REVISION</scope>
</reference>
<reference key="6">
    <citation type="journal article" date="2004" name="Nat. Genet.">
        <title>Complete sequencing and characterization of 21,243 full-length human cDNAs.</title>
        <authorList>
            <person name="Ota T."/>
            <person name="Suzuki Y."/>
            <person name="Nishikawa T."/>
            <person name="Otsuki T."/>
            <person name="Sugiyama T."/>
            <person name="Irie R."/>
            <person name="Wakamatsu A."/>
            <person name="Hayashi K."/>
            <person name="Sato H."/>
            <person name="Nagai K."/>
            <person name="Kimura K."/>
            <person name="Makita H."/>
            <person name="Sekine M."/>
            <person name="Obayashi M."/>
            <person name="Nishi T."/>
            <person name="Shibahara T."/>
            <person name="Tanaka T."/>
            <person name="Ishii S."/>
            <person name="Yamamoto J."/>
            <person name="Saito K."/>
            <person name="Kawai Y."/>
            <person name="Isono Y."/>
            <person name="Nakamura Y."/>
            <person name="Nagahari K."/>
            <person name="Murakami K."/>
            <person name="Yasuda T."/>
            <person name="Iwayanagi T."/>
            <person name="Wagatsuma M."/>
            <person name="Shiratori A."/>
            <person name="Sudo H."/>
            <person name="Hosoiri T."/>
            <person name="Kaku Y."/>
            <person name="Kodaira H."/>
            <person name="Kondo H."/>
            <person name="Sugawara M."/>
            <person name="Takahashi M."/>
            <person name="Kanda K."/>
            <person name="Yokoi T."/>
            <person name="Furuya T."/>
            <person name="Kikkawa E."/>
            <person name="Omura Y."/>
            <person name="Abe K."/>
            <person name="Kamihara K."/>
            <person name="Katsuta N."/>
            <person name="Sato K."/>
            <person name="Tanikawa M."/>
            <person name="Yamazaki M."/>
            <person name="Ninomiya K."/>
            <person name="Ishibashi T."/>
            <person name="Yamashita H."/>
            <person name="Murakawa K."/>
            <person name="Fujimori K."/>
            <person name="Tanai H."/>
            <person name="Kimata M."/>
            <person name="Watanabe M."/>
            <person name="Hiraoka S."/>
            <person name="Chiba Y."/>
            <person name="Ishida S."/>
            <person name="Ono Y."/>
            <person name="Takiguchi S."/>
            <person name="Watanabe S."/>
            <person name="Yosida M."/>
            <person name="Hotuta T."/>
            <person name="Kusano J."/>
            <person name="Kanehori K."/>
            <person name="Takahashi-Fujii A."/>
            <person name="Hara H."/>
            <person name="Tanase T.-O."/>
            <person name="Nomura Y."/>
            <person name="Togiya S."/>
            <person name="Komai F."/>
            <person name="Hara R."/>
            <person name="Takeuchi K."/>
            <person name="Arita M."/>
            <person name="Imose N."/>
            <person name="Musashino K."/>
            <person name="Yuuki H."/>
            <person name="Oshima A."/>
            <person name="Sasaki N."/>
            <person name="Aotsuka S."/>
            <person name="Yoshikawa Y."/>
            <person name="Matsunawa H."/>
            <person name="Ichihara T."/>
            <person name="Shiohata N."/>
            <person name="Sano S."/>
            <person name="Moriya S."/>
            <person name="Momiyama H."/>
            <person name="Satoh N."/>
            <person name="Takami S."/>
            <person name="Terashima Y."/>
            <person name="Suzuki O."/>
            <person name="Nakagawa S."/>
            <person name="Senoh A."/>
            <person name="Mizoguchi H."/>
            <person name="Goto Y."/>
            <person name="Shimizu F."/>
            <person name="Wakebe H."/>
            <person name="Hishigaki H."/>
            <person name="Watanabe T."/>
            <person name="Sugiyama A."/>
            <person name="Takemoto M."/>
            <person name="Kawakami B."/>
            <person name="Yamazaki M."/>
            <person name="Watanabe K."/>
            <person name="Kumagai A."/>
            <person name="Itakura S."/>
            <person name="Fukuzumi Y."/>
            <person name="Fujimori Y."/>
            <person name="Komiyama M."/>
            <person name="Tashiro H."/>
            <person name="Tanigami A."/>
            <person name="Fujiwara T."/>
            <person name="Ono T."/>
            <person name="Yamada K."/>
            <person name="Fujii Y."/>
            <person name="Ozaki K."/>
            <person name="Hirao M."/>
            <person name="Ohmori Y."/>
            <person name="Kawabata A."/>
            <person name="Hikiji T."/>
            <person name="Kobatake N."/>
            <person name="Inagaki H."/>
            <person name="Ikema Y."/>
            <person name="Okamoto S."/>
            <person name="Okitani R."/>
            <person name="Kawakami T."/>
            <person name="Noguchi S."/>
            <person name="Itoh T."/>
            <person name="Shigeta K."/>
            <person name="Senba T."/>
            <person name="Matsumura K."/>
            <person name="Nakajima Y."/>
            <person name="Mizuno T."/>
            <person name="Morinaga M."/>
            <person name="Sasaki M."/>
            <person name="Togashi T."/>
            <person name="Oyama M."/>
            <person name="Hata H."/>
            <person name="Watanabe M."/>
            <person name="Komatsu T."/>
            <person name="Mizushima-Sugano J."/>
            <person name="Satoh T."/>
            <person name="Shirai Y."/>
            <person name="Takahashi Y."/>
            <person name="Nakagawa K."/>
            <person name="Okumura K."/>
            <person name="Nagase T."/>
            <person name="Nomura N."/>
            <person name="Kikuchi H."/>
            <person name="Masuho Y."/>
            <person name="Yamashita R."/>
            <person name="Nakai K."/>
            <person name="Yada T."/>
            <person name="Nakamura Y."/>
            <person name="Ohara O."/>
            <person name="Isogai T."/>
            <person name="Sugano S."/>
        </authorList>
    </citation>
    <scope>NUCLEOTIDE SEQUENCE [LARGE SCALE MRNA] (ISOFORMS 2; 3; 4 AND 6)</scope>
    <source>
        <tissue>Embryo</tissue>
        <tissue>Placenta</tissue>
    </source>
</reference>
<reference key="7">
    <citation type="journal article" date="2007" name="BMC Genomics">
        <title>The full-ORF clone resource of the German cDNA consortium.</title>
        <authorList>
            <person name="Bechtel S."/>
            <person name="Rosenfelder H."/>
            <person name="Duda A."/>
            <person name="Schmidt C.P."/>
            <person name="Ernst U."/>
            <person name="Wellenreuther R."/>
            <person name="Mehrle A."/>
            <person name="Schuster C."/>
            <person name="Bahr A."/>
            <person name="Bloecker H."/>
            <person name="Heubner D."/>
            <person name="Hoerlein A."/>
            <person name="Michel G."/>
            <person name="Wedler H."/>
            <person name="Koehrer K."/>
            <person name="Ottenwaelder B."/>
            <person name="Poustka A."/>
            <person name="Wiemann S."/>
            <person name="Schupp I."/>
        </authorList>
    </citation>
    <scope>NUCLEOTIDE SEQUENCE [LARGE SCALE MRNA] (ISOFORM 1)</scope>
    <scope>VARIANT GLN-354</scope>
    <source>
        <tissue>Testis</tissue>
    </source>
</reference>
<reference key="8">
    <citation type="journal article" date="2005" name="Nature">
        <title>Generation and annotation of the DNA sequences of human chromosomes 2 and 4.</title>
        <authorList>
            <person name="Hillier L.W."/>
            <person name="Graves T.A."/>
            <person name="Fulton R.S."/>
            <person name="Fulton L.A."/>
            <person name="Pepin K.H."/>
            <person name="Minx P."/>
            <person name="Wagner-McPherson C."/>
            <person name="Layman D."/>
            <person name="Wylie K."/>
            <person name="Sekhon M."/>
            <person name="Becker M.C."/>
            <person name="Fewell G.A."/>
            <person name="Delehaunty K.D."/>
            <person name="Miner T.L."/>
            <person name="Nash W.E."/>
            <person name="Kremitzki C."/>
            <person name="Oddy L."/>
            <person name="Du H."/>
            <person name="Sun H."/>
            <person name="Bradshaw-Cordum H."/>
            <person name="Ali J."/>
            <person name="Carter J."/>
            <person name="Cordes M."/>
            <person name="Harris A."/>
            <person name="Isak A."/>
            <person name="van Brunt A."/>
            <person name="Nguyen C."/>
            <person name="Du F."/>
            <person name="Courtney L."/>
            <person name="Kalicki J."/>
            <person name="Ozersky P."/>
            <person name="Abbott S."/>
            <person name="Armstrong J."/>
            <person name="Belter E.A."/>
            <person name="Caruso L."/>
            <person name="Cedroni M."/>
            <person name="Cotton M."/>
            <person name="Davidson T."/>
            <person name="Desai A."/>
            <person name="Elliott G."/>
            <person name="Erb T."/>
            <person name="Fronick C."/>
            <person name="Gaige T."/>
            <person name="Haakenson W."/>
            <person name="Haglund K."/>
            <person name="Holmes A."/>
            <person name="Harkins R."/>
            <person name="Kim K."/>
            <person name="Kruchowski S.S."/>
            <person name="Strong C.M."/>
            <person name="Grewal N."/>
            <person name="Goyea E."/>
            <person name="Hou S."/>
            <person name="Levy A."/>
            <person name="Martinka S."/>
            <person name="Mead K."/>
            <person name="McLellan M.D."/>
            <person name="Meyer R."/>
            <person name="Randall-Maher J."/>
            <person name="Tomlinson C."/>
            <person name="Dauphin-Kohlberg S."/>
            <person name="Kozlowicz-Reilly A."/>
            <person name="Shah N."/>
            <person name="Swearengen-Shahid S."/>
            <person name="Snider J."/>
            <person name="Strong J.T."/>
            <person name="Thompson J."/>
            <person name="Yoakum M."/>
            <person name="Leonard S."/>
            <person name="Pearman C."/>
            <person name="Trani L."/>
            <person name="Radionenko M."/>
            <person name="Waligorski J.E."/>
            <person name="Wang C."/>
            <person name="Rock S.M."/>
            <person name="Tin-Wollam A.-M."/>
            <person name="Maupin R."/>
            <person name="Latreille P."/>
            <person name="Wendl M.C."/>
            <person name="Yang S.-P."/>
            <person name="Pohl C."/>
            <person name="Wallis J.W."/>
            <person name="Spieth J."/>
            <person name="Bieri T.A."/>
            <person name="Berkowicz N."/>
            <person name="Nelson J.O."/>
            <person name="Osborne J."/>
            <person name="Ding L."/>
            <person name="Meyer R."/>
            <person name="Sabo A."/>
            <person name="Shotland Y."/>
            <person name="Sinha P."/>
            <person name="Wohldmann P.E."/>
            <person name="Cook L.L."/>
            <person name="Hickenbotham M.T."/>
            <person name="Eldred J."/>
            <person name="Williams D."/>
            <person name="Jones T.A."/>
            <person name="She X."/>
            <person name="Ciccarelli F.D."/>
            <person name="Izaurralde E."/>
            <person name="Taylor J."/>
            <person name="Schmutz J."/>
            <person name="Myers R.M."/>
            <person name="Cox D.R."/>
            <person name="Huang X."/>
            <person name="McPherson J.D."/>
            <person name="Mardis E.R."/>
            <person name="Clifton S.W."/>
            <person name="Warren W.C."/>
            <person name="Chinwalla A.T."/>
            <person name="Eddy S.R."/>
            <person name="Marra M.A."/>
            <person name="Ovcharenko I."/>
            <person name="Furey T.S."/>
            <person name="Miller W."/>
            <person name="Eichler E.E."/>
            <person name="Bork P."/>
            <person name="Suyama M."/>
            <person name="Torrents D."/>
            <person name="Waterston R.H."/>
            <person name="Wilson R.K."/>
        </authorList>
    </citation>
    <scope>NUCLEOTIDE SEQUENCE [LARGE SCALE GENOMIC DNA]</scope>
</reference>
<reference key="9">
    <citation type="journal article" date="2004" name="Genome Res.">
        <title>The status, quality, and expansion of the NIH full-length cDNA project: the Mammalian Gene Collection (MGC).</title>
        <authorList>
            <consortium name="The MGC Project Team"/>
        </authorList>
    </citation>
    <scope>NUCLEOTIDE SEQUENCE [LARGE SCALE MRNA] (ISOFORM 1)</scope>
    <scope>VARIANT GLN-354</scope>
    <source>
        <tissue>Placenta</tissue>
    </source>
</reference>
<reference key="10">
    <citation type="submission" date="2010-01" db="UniProtKB">
        <authorList>
            <person name="Bienvenut W.V."/>
        </authorList>
    </citation>
    <scope>PROTEIN SEQUENCE OF 1-12; 33-49; 120-137; 185-201 AND 230-244</scope>
    <scope>ACETYLATION AT MET-1</scope>
    <scope>IDENTIFICATION BY MASS SPECTROMETRY</scope>
    <source>
        <tissue>Ovarian carcinoma</tissue>
    </source>
</reference>
<reference key="11">
    <citation type="journal article" date="2004" name="J. Biol. Chem.">
        <title>HsAtg4B/HsApg4B/autophagin-1 cleaves the carboxyl termini of three human Atg8 homologues and delipidates microtubule-associated protein light chain 3- and GABAA receptor-associated protein-phospholipid conjugates.</title>
        <authorList>
            <person name="Tanida I."/>
            <person name="Sou Y.-S."/>
            <person name="Ezaki J."/>
            <person name="Minematsu-Ikeguchi N."/>
            <person name="Ueno T."/>
            <person name="Kominami E."/>
        </authorList>
    </citation>
    <scope>FUNCTION</scope>
    <scope>CATALYTIC ACTIVITY</scope>
    <scope>ACTIVE SITE</scope>
    <scope>MUTAGENESIS OF CYS-74</scope>
</reference>
<reference key="12">
    <citation type="journal article" date="2006" name="Cell">
        <title>Global, in vivo, and site-specific phosphorylation dynamics in signaling networks.</title>
        <authorList>
            <person name="Olsen J.V."/>
            <person name="Blagoev B."/>
            <person name="Gnad F."/>
            <person name="Macek B."/>
            <person name="Kumar C."/>
            <person name="Mortensen P."/>
            <person name="Mann M."/>
        </authorList>
    </citation>
    <scope>PHOSPHORYLATION [LARGE SCALE ANALYSIS] AT SER-383</scope>
    <scope>IDENTIFICATION BY MASS SPECTROMETRY [LARGE SCALE ANALYSIS]</scope>
    <source>
        <tissue>Cervix carcinoma</tissue>
    </source>
</reference>
<reference key="13">
    <citation type="journal article" date="2007" name="EMBO J.">
        <title>Reactive oxygen species are essential for autophagy and specifically regulate the activity of Atg4.</title>
        <authorList>
            <person name="Scherz-Shouval R."/>
            <person name="Shvets E."/>
            <person name="Fass E."/>
            <person name="Shorer H."/>
            <person name="Gil L."/>
            <person name="Elazar Z."/>
        </authorList>
    </citation>
    <scope>FUNCTION</scope>
    <scope>ACTIVITY REGULATION</scope>
    <scope>MUTAGENESIS OF CYS-78</scope>
</reference>
<reference key="14">
    <citation type="journal article" date="2009" name="Anal. Chem.">
        <title>Lys-N and trypsin cover complementary parts of the phosphoproteome in a refined SCX-based approach.</title>
        <authorList>
            <person name="Gauci S."/>
            <person name="Helbig A.O."/>
            <person name="Slijper M."/>
            <person name="Krijgsveld J."/>
            <person name="Heck A.J."/>
            <person name="Mohammed S."/>
        </authorList>
    </citation>
    <scope>ACETYLATION [LARGE SCALE ANALYSIS] AT MET-1</scope>
    <scope>IDENTIFICATION BY MASS SPECTROMETRY [LARGE SCALE ANALYSIS]</scope>
</reference>
<reference key="15">
    <citation type="journal article" date="2009" name="Mol. Cell. Proteomics">
        <title>Large-scale proteomics analysis of the human kinome.</title>
        <authorList>
            <person name="Oppermann F.S."/>
            <person name="Gnad F."/>
            <person name="Olsen J.V."/>
            <person name="Hornberger R."/>
            <person name="Greff Z."/>
            <person name="Keri G."/>
            <person name="Mann M."/>
            <person name="Daub H."/>
        </authorList>
    </citation>
    <scope>PHOSPHORYLATION [LARGE SCALE ANALYSIS] AT SER-383</scope>
    <scope>IDENTIFICATION BY MASS SPECTROMETRY [LARGE SCALE ANALYSIS]</scope>
</reference>
<reference key="16">
    <citation type="journal article" date="2009" name="Sci. Signal.">
        <title>Quantitative phosphoproteomic analysis of T cell receptor signaling reveals system-wide modulation of protein-protein interactions.</title>
        <authorList>
            <person name="Mayya V."/>
            <person name="Lundgren D.H."/>
            <person name="Hwang S.-I."/>
            <person name="Rezaul K."/>
            <person name="Wu L."/>
            <person name="Eng J.K."/>
            <person name="Rodionov V."/>
            <person name="Han D.K."/>
        </authorList>
    </citation>
    <scope>PHOSPHORYLATION [LARGE SCALE ANALYSIS] AT SER-383</scope>
    <scope>IDENTIFICATION BY MASS SPECTROMETRY [LARGE SCALE ANALYSIS]</scope>
    <source>
        <tissue>Leukemic T-cell</tissue>
    </source>
</reference>
<reference key="17">
    <citation type="journal article" date="2010" name="Autophagy">
        <title>Synthetic substrates for measuring activity of autophagy proteases: autophagins (Atg4).</title>
        <authorList>
            <person name="Shu C.W."/>
            <person name="Drag M."/>
            <person name="Bekes M."/>
            <person name="Zhai D."/>
            <person name="Salvesen G.S."/>
            <person name="Reed J.C."/>
        </authorList>
    </citation>
    <scope>FUNCTION</scope>
    <scope>ACTIVE SITE</scope>
    <scope>MUTAGENESIS OF CYS-74</scope>
</reference>
<reference key="18">
    <citation type="journal article" date="2010" name="Sci. Signal.">
        <title>Quantitative phosphoproteomics reveals widespread full phosphorylation site occupancy during mitosis.</title>
        <authorList>
            <person name="Olsen J.V."/>
            <person name="Vermeulen M."/>
            <person name="Santamaria A."/>
            <person name="Kumar C."/>
            <person name="Miller M.L."/>
            <person name="Jensen L.J."/>
            <person name="Gnad F."/>
            <person name="Cox J."/>
            <person name="Jensen T.S."/>
            <person name="Nigg E.A."/>
            <person name="Brunak S."/>
            <person name="Mann M."/>
        </authorList>
    </citation>
    <scope>PHOSPHORYLATION [LARGE SCALE ANALYSIS] AT SER-383</scope>
    <scope>IDENTIFICATION BY MASS SPECTROMETRY [LARGE SCALE ANALYSIS]</scope>
    <source>
        <tissue>Cervix carcinoma</tissue>
    </source>
</reference>
<reference key="19">
    <citation type="journal article" date="2011" name="BMC Syst. Biol.">
        <title>Initial characterization of the human central proteome.</title>
        <authorList>
            <person name="Burkard T.R."/>
            <person name="Planyavsky M."/>
            <person name="Kaupe I."/>
            <person name="Breitwieser F.P."/>
            <person name="Buerckstuemmer T."/>
            <person name="Bennett K.L."/>
            <person name="Superti-Furga G."/>
            <person name="Colinge J."/>
        </authorList>
    </citation>
    <scope>IDENTIFICATION BY MASS SPECTROMETRY [LARGE SCALE ANALYSIS]</scope>
</reference>
<reference key="20">
    <citation type="journal article" date="2011" name="J. Biol. Chem.">
        <title>Kinetics comparisons of mammalian Atg4 homologues indicate selective preferences toward diverse Atg8 substrates.</title>
        <authorList>
            <person name="Li M."/>
            <person name="Hou Y."/>
            <person name="Wang J."/>
            <person name="Chen X."/>
            <person name="Shao Z.M."/>
            <person name="Yin X.M."/>
        </authorList>
    </citation>
    <scope>FUNCTION</scope>
    <scope>BIOPHYSICOCHEMICAL PROPERTIES</scope>
    <scope>ACTIVITY REGULATION</scope>
</reference>
<reference key="21">
    <citation type="journal article" date="2011" name="Sci. Signal.">
        <title>System-wide temporal characterization of the proteome and phosphoproteome of human embryonic stem cell differentiation.</title>
        <authorList>
            <person name="Rigbolt K.T."/>
            <person name="Prokhorova T.A."/>
            <person name="Akimov V."/>
            <person name="Henningsen J."/>
            <person name="Johansen P.T."/>
            <person name="Kratchmarova I."/>
            <person name="Kassem M."/>
            <person name="Mann M."/>
            <person name="Olsen J.V."/>
            <person name="Blagoev B."/>
        </authorList>
    </citation>
    <scope>PHOSPHORYLATION [LARGE SCALE ANALYSIS] AT SER-383</scope>
    <scope>IDENTIFICATION BY MASS SPECTROMETRY [LARGE SCALE ANALYSIS]</scope>
</reference>
<reference key="22">
    <citation type="journal article" date="2012" name="Autophagy">
        <title>A high-throughput FRET-based assay for determination of Atg4 activity.</title>
        <authorList>
            <person name="Li M."/>
            <person name="Chen X."/>
            <person name="Ye Q.Z."/>
            <person name="Vogt A."/>
            <person name="Yin X.M."/>
        </authorList>
    </citation>
    <scope>FUNCTION</scope>
    <scope>BIOPHYSICOCHEMICAL PROPERTIES</scope>
</reference>
<reference key="23">
    <citation type="journal article" date="2012" name="Mol. Cell. Proteomics">
        <title>Comparative large-scale characterisation of plant vs. mammal proteins reveals similar and idiosyncratic N-alpha acetylation features.</title>
        <authorList>
            <person name="Bienvenut W.V."/>
            <person name="Sumpton D."/>
            <person name="Martinez A."/>
            <person name="Lilla S."/>
            <person name="Espagne C."/>
            <person name="Meinnel T."/>
            <person name="Giglione C."/>
        </authorList>
    </citation>
    <scope>ACETYLATION [LARGE SCALE ANALYSIS] AT MET-1</scope>
    <scope>IDENTIFICATION BY MASS SPECTROMETRY [LARGE SCALE ANALYSIS]</scope>
</reference>
<reference key="24">
    <citation type="journal article" date="2012" name="PLoS Genet.">
        <title>Regulation of ATG4B stability by RNF5 limits basal levels of autophagy and influences susceptibility to bacterial infection.</title>
        <authorList>
            <person name="Kuang E."/>
            <person name="Okumura C.Y."/>
            <person name="Sheffy-Levin S."/>
            <person name="Varsano T."/>
            <person name="Shu V.C."/>
            <person name="Qi J."/>
            <person name="Niesman I.R."/>
            <person name="Yang H.J."/>
            <person name="Lopez-Otin C."/>
            <person name="Yang W.Y."/>
            <person name="Reed J.C."/>
            <person name="Broday L."/>
            <person name="Nizet V."/>
            <person name="Ronai Z.A."/>
        </authorList>
    </citation>
    <scope>UBIQUITINATION</scope>
</reference>
<reference key="25">
    <citation type="journal article" date="2012" name="Proc. Natl. Acad. Sci. U.S.A.">
        <title>N-terminal acetylome analyses and functional insights of the N-terminal acetyltransferase NatB.</title>
        <authorList>
            <person name="Van Damme P."/>
            <person name="Lasa M."/>
            <person name="Polevoda B."/>
            <person name="Gazquez C."/>
            <person name="Elosegui-Artola A."/>
            <person name="Kim D.S."/>
            <person name="De Juan-Pardo E."/>
            <person name="Demeyer K."/>
            <person name="Hole K."/>
            <person name="Larrea E."/>
            <person name="Timmerman E."/>
            <person name="Prieto J."/>
            <person name="Arnesen T."/>
            <person name="Sherman F."/>
            <person name="Gevaert K."/>
            <person name="Aldabe R."/>
        </authorList>
    </citation>
    <scope>ACETYLATION [LARGE SCALE ANALYSIS] AT MET-1</scope>
    <scope>IDENTIFICATION BY MASS SPECTROMETRY [LARGE SCALE ANALYSIS]</scope>
</reference>
<reference key="26">
    <citation type="journal article" date="2014" name="J. Proteomics">
        <title>An enzyme assisted RP-RPLC approach for in-depth analysis of human liver phosphoproteome.</title>
        <authorList>
            <person name="Bian Y."/>
            <person name="Song C."/>
            <person name="Cheng K."/>
            <person name="Dong M."/>
            <person name="Wang F."/>
            <person name="Huang J."/>
            <person name="Sun D."/>
            <person name="Wang L."/>
            <person name="Ye M."/>
            <person name="Zou H."/>
        </authorList>
    </citation>
    <scope>PHOSPHORYLATION [LARGE SCALE ANALYSIS] AT SER-383</scope>
    <scope>IDENTIFICATION BY MASS SPECTROMETRY [LARGE SCALE ANALYSIS]</scope>
    <source>
        <tissue>Liver</tissue>
    </source>
</reference>
<reference key="27">
    <citation type="journal article" date="2015" name="J. Biol. Chem.">
        <title>ATG4B (Autophagin-1) phosphorylation modulates autophagy.</title>
        <authorList>
            <person name="Yang Z."/>
            <person name="Wilkie-Grantham R.P."/>
            <person name="Yanagi T."/>
            <person name="Shu C.W."/>
            <person name="Matsuzawa S."/>
            <person name="Reed J.C."/>
        </authorList>
    </citation>
    <scope>FUNCTION</scope>
    <scope>ACTIVE SITE</scope>
    <scope>PHOSPHORYLATION AT SER-383 AND SER-392</scope>
    <scope>MUTAGENESIS OF CYS-74; SER-383 AND SER-392</scope>
</reference>
<reference key="28">
    <citation type="journal article" date="2016" name="Oncotarget">
        <title>O-GlcNAcylation of ATG4B positively regulates autophagy by increasing its hydroxylase activity.</title>
        <authorList>
            <person name="Jo Y.K."/>
            <person name="Park N.Y."/>
            <person name="Park S.J."/>
            <person name="Kim B.G."/>
            <person name="Shin J.H."/>
            <person name="Jo D.S."/>
            <person name="Bae D.J."/>
            <person name="Suh Y.A."/>
            <person name="Chang J.H."/>
            <person name="Lee E.K."/>
            <person name="Kim S.Y."/>
            <person name="Kim J.C."/>
            <person name="Cho D.H."/>
        </authorList>
    </citation>
    <scope>FUNCTION</scope>
    <scope>GLYCOSYLATION</scope>
</reference>
<reference key="29">
    <citation type="journal article" date="2017" name="Autophagy">
        <title>Autophagy impairment mediated by S-nitrosation of ATG4B leads to neurotoxicity in response to hyperglycemia.</title>
        <authorList>
            <person name="Li Y."/>
            <person name="Zhang Y."/>
            <person name="Wang L."/>
            <person name="Wang P."/>
            <person name="Xue Y."/>
            <person name="Li X."/>
            <person name="Qiao X."/>
            <person name="Zhang X."/>
            <person name="Xu T."/>
            <person name="Liu G."/>
            <person name="Li P."/>
            <person name="Chen C."/>
        </authorList>
    </citation>
    <scope>FUNCTION</scope>
    <scope>S-NITROSYLATION AT CYS-189; CYS-292 AND CYS-301</scope>
    <scope>MUTAGENESIS OF CYS-189; CYS-292 AND CYS-301</scope>
</reference>
<reference key="30">
    <citation type="journal article" date="2017" name="Cancer Cell">
        <title>MST4 phosphorylation of ATG4B regulates autophagic activity, tumorigenicity, and radioresistance in glioblastoma.</title>
        <authorList>
            <person name="Huang T."/>
            <person name="Kim C.K."/>
            <person name="Alvarez A.A."/>
            <person name="Pangeni R.P."/>
            <person name="Wan X."/>
            <person name="Song X."/>
            <person name="Shi T."/>
            <person name="Yang Y."/>
            <person name="Sastry N."/>
            <person name="Horbinski C.M."/>
            <person name="Lu S."/>
            <person name="Stupp R."/>
            <person name="Kessler J.A."/>
            <person name="Nishikawa R."/>
            <person name="Nakano I."/>
            <person name="Sulman E.P."/>
            <person name="Lu X."/>
            <person name="James C.D."/>
            <person name="Yin X.M."/>
            <person name="Hu B."/>
            <person name="Cheng S.Y."/>
        </authorList>
    </citation>
    <scope>FUNCTION</scope>
    <scope>PHOSPHORYLATION AT SER-383</scope>
    <scope>MUTAGENESIS OF SER-383</scope>
</reference>
<reference key="31">
    <citation type="journal article" date="2017" name="Nat. Commun.">
        <title>A reversible phospho-switch mediated by ULK1 regulates the activity of autophagy protease ATG4B.</title>
        <authorList>
            <person name="Pengo N."/>
            <person name="Agrotis A."/>
            <person name="Prak K."/>
            <person name="Jones J."/>
            <person name="Ketteler R."/>
        </authorList>
    </citation>
    <scope>FUNCTION</scope>
    <scope>ACTIVE SITE</scope>
    <scope>PHOSPHORYLATION AT SER-316</scope>
    <scope>MUTAGENESIS OF CYS-74 AND SER-316</scope>
</reference>
<reference key="32">
    <citation type="journal article" date="2018" name="Autophagy">
        <title>AKT-mediated phosphorylation of ATG4B impairs mitochondrial activity and enhances the Warburg effect in hepatocellular carcinoma cells.</title>
        <authorList>
            <person name="Ni Z."/>
            <person name="He J."/>
            <person name="Wu Y."/>
            <person name="Hu C."/>
            <person name="Dai X."/>
            <person name="Yan X."/>
            <person name="Li B."/>
            <person name="Li X."/>
            <person name="Xiong H."/>
            <person name="Li Y."/>
            <person name="Li S."/>
            <person name="Xu L."/>
            <person name="Li Y."/>
            <person name="Lian J."/>
            <person name="He F."/>
        </authorList>
    </citation>
    <scope>SUBCELLULAR LOCATION</scope>
    <scope>PHOSPHORYLATION AT SER-34</scope>
</reference>
<reference key="33">
    <citation type="journal article" date="2018" name="Autophagy">
        <title>Delipidation of mammalian Atg8-family proteins by each of the four ATG4 proteases.</title>
        <authorList>
            <person name="Kauffman K.J."/>
            <person name="Yu S."/>
            <person name="Jin J."/>
            <person name="Mugo B."/>
            <person name="Nguyen N."/>
            <person name="O'Brien A."/>
            <person name="Nag S."/>
            <person name="Lystad A.H."/>
            <person name="Melia T.J."/>
        </authorList>
    </citation>
    <scope>FUNCTION</scope>
    <scope>CATALYTIC ACTIVITY</scope>
    <scope>MUTAGENESIS OF 388-PHE--LEU-391</scope>
</reference>
<reference key="34">
    <citation type="journal article" date="2018" name="Front. Cell Dev. Biol.">
        <title>Identification of kinases and phosphatases that regulate ATG4B activity by siRNA and small molecule screening in cells.</title>
        <authorList>
            <person name="Pengo N."/>
            <person name="Prak K."/>
            <person name="Costa J.R."/>
            <person name="Luft C."/>
            <person name="Agrotis A."/>
            <person name="Freeman J."/>
            <person name="Gewinner C.A."/>
            <person name="Chan A.W.E."/>
            <person name="Selwood D.L."/>
            <person name="Kriston-Vizi J."/>
            <person name="Ketteler R."/>
        </authorList>
    </citation>
    <scope>FUNCTION</scope>
    <scope>PHOSPHORYLATION AT SER-34</scope>
    <scope>ACTIVE SITE</scope>
    <scope>MUTAGENESIS OF SER-34; CYS-74; SER-121 AND SER-262</scope>
</reference>
<reference key="35">
    <citation type="journal article" date="2018" name="Sci. Rep.">
        <title>A new quinoline-based chemical probe inhibits the autophagy-related cysteine protease ATG4B.</title>
        <authorList>
            <person name="Bosc D."/>
            <person name="Vezenkov L."/>
            <person name="Bortnik S."/>
            <person name="An J."/>
            <person name="Xu J."/>
            <person name="Choutka C."/>
            <person name="Hannigan A.M."/>
            <person name="Kovacic S."/>
            <person name="Loo S."/>
            <person name="Clark P.G.K."/>
            <person name="Chen G."/>
            <person name="Guay-Ross R.N."/>
            <person name="Yang K."/>
            <person name="Dragowska W.H."/>
            <person name="Zhang F."/>
            <person name="Go N.E."/>
            <person name="Leung A."/>
            <person name="Honson N.S."/>
            <person name="Pfeifer T.A."/>
            <person name="Gleave M."/>
            <person name="Bally M."/>
            <person name="Jones S.J."/>
            <person name="Gorski S.M."/>
            <person name="Young R.N."/>
        </authorList>
    </citation>
    <scope>FUNCTION</scope>
    <scope>ACTIVITY REGULATION</scope>
</reference>
<reference key="36">
    <citation type="journal article" date="2019" name="Autophagy">
        <title>Redundancy of human ATG4 protease isoforms in autophagy and LC3/GABARAP processing revealed in cells.</title>
        <authorList>
            <person name="Agrotis A."/>
            <person name="Pengo N."/>
            <person name="Burden J.J."/>
            <person name="Ketteler R."/>
        </authorList>
    </citation>
    <scope>FUNCTION</scope>
</reference>
<reference key="37">
    <citation type="journal article" date="2019" name="J. Biol. Chem.">
        <title>Human ATG4 autophagy proteases counteract attachment of ubiquitin-like LC3/GABARAP proteins to other cellular proteins.</title>
        <authorList>
            <person name="Agrotis A."/>
            <person name="von Chamier L."/>
            <person name="Oliver H."/>
            <person name="Kiso K."/>
            <person name="Singh T."/>
            <person name="Ketteler R."/>
        </authorList>
    </citation>
    <scope>FUNCTION</scope>
</reference>
<reference key="38">
    <citation type="journal article" date="2020" name="Autophagy">
        <title>The protease activity of human ATG4B is regulated by reversible oxidative modification.</title>
        <authorList>
            <person name="Zheng X."/>
            <person name="Yang Z."/>
            <person name="Gu Q."/>
            <person name="Xia F."/>
            <person name="Fu Y."/>
            <person name="Liu P."/>
            <person name="Yin X.M."/>
            <person name="Li M."/>
        </authorList>
    </citation>
    <scope>DISULFIDE BONDS</scope>
    <scope>MUTAGENESIS OF CYS-78; CYS-89; CYS-183; CYS-189; CYS-203; CYS-246; CYS-292; CYS-301; CYS-306; CYS-323; CYS-333 AND CYS-361</scope>
</reference>
<reference key="39">
    <citation type="journal article" date="2020" name="ChemBioChem">
        <title>Distinct mechanisms for processing autophagy protein LC3-PE by RavZ and ATG4B.</title>
        <authorList>
            <person name="Yang A."/>
            <person name="Pantoom S."/>
            <person name="Wu Y.W."/>
        </authorList>
    </citation>
    <scope>FUNCTION</scope>
    <scope>CATALYTIC ACTIVITY</scope>
</reference>
<reference key="40">
    <citation type="journal article" date="2021" name="Cell. Signal.">
        <title>PFKP facilitates ATG4B phosphorylation during amino acid deprivation-induced autophagy.</title>
        <authorList>
            <person name="Li X."/>
            <person name="Sun L."/>
            <person name="Yan G."/>
            <person name="Yan X."/>
        </authorList>
    </citation>
    <scope>INTERACTION WITH PFKP</scope>
    <scope>PHOSPHORYLATION AT SER-34</scope>
</reference>
<reference key="41">
    <citation type="journal article" date="2021" name="Mol. Cell">
        <title>ATG4 family proteins drive phagophore growth independently of the LC3/GABARAP lipidation system.</title>
        <authorList>
            <person name="Nguyen T.N."/>
            <person name="Padman B.S."/>
            <person name="Zellner S."/>
            <person name="Khuu G."/>
            <person name="Uoselis L."/>
            <person name="Lam W.K."/>
            <person name="Skulsuppaisarn M."/>
            <person name="Lindblom R.S.J."/>
            <person name="Watts E.M."/>
            <person name="Behrends C."/>
            <person name="Lazarou M."/>
        </authorList>
    </citation>
    <scope>FUNCTION</scope>
</reference>
<reference key="42">
    <citation type="journal article" date="2021" name="Mol. Cell">
        <title>Non-canonical autophagy drives alternative ATG8 conjugation to phosphatidylserine.</title>
        <authorList>
            <person name="Durgan J."/>
            <person name="Lystad A.H."/>
            <person name="Sloan K."/>
            <person name="Carlsson S.R."/>
            <person name="Wilson M.I."/>
            <person name="Marcassa E."/>
            <person name="Ulferts R."/>
            <person name="Webster J."/>
            <person name="Lopez-Clavijo A.F."/>
            <person name="Wakelam M.J."/>
            <person name="Beale R."/>
            <person name="Simonsen A."/>
            <person name="Oxley D."/>
            <person name="Florey O."/>
        </authorList>
    </citation>
    <scope>FUNCTION</scope>
    <scope>CATALYTIC ACTIVITY</scope>
</reference>
<reference key="43">
    <citation type="journal article" date="2005" name="J. Biol. Chem.">
        <title>Structural basis for the specificity and catalysis of human Atg4B responsible for mammalian autophagy.</title>
        <authorList>
            <person name="Sugawara K."/>
            <person name="Suzuki N.N."/>
            <person name="Fujioka Y."/>
            <person name="Mizushima N."/>
            <person name="Ohsumi Y."/>
            <person name="Inagaki F."/>
        </authorList>
    </citation>
    <scope>X-RAY CRYSTALLOGRAPHY (1.9 ANGSTROMS)</scope>
    <scope>ACTIVE SITE</scope>
    <scope>MUTAGENESIS OF CYS-74; TRP-142; ARG-229; ASP-278 AND HIS-280</scope>
</reference>
<reference key="44">
    <citation type="journal article" date="2006" name="J. Mol. Biol.">
        <title>The crystal structure of human Atg4b, a processing and de-conjugating enzyme for autophagosome-forming modifiers.</title>
        <authorList>
            <person name="Kumanomidou T."/>
            <person name="Mizushima T."/>
            <person name="Komatsu M."/>
            <person name="Suzuki A."/>
            <person name="Tanida I."/>
            <person name="Sou Y.-S."/>
            <person name="Ueno T."/>
            <person name="Kominami E."/>
            <person name="Tanaka K."/>
            <person name="Yamane T."/>
        </authorList>
    </citation>
    <scope>X-RAY CRYSTALLOGRAPHY (2.0 ANGSTROMS)</scope>
    <scope>ACTIVE SITE</scope>
    <scope>MUTAGENESIS OF CYS-74; ASP-278 AND HIS-280</scope>
</reference>
<reference key="45">
    <citation type="journal article" date="2009" name="EMBO J.">
        <title>The structure of Atg4B-LC3 complex reveals the mechanism of LC3 processing and delipidation during autophagy.</title>
        <authorList>
            <person name="Satoo K."/>
            <person name="Noda N.N."/>
            <person name="Kumeta H."/>
            <person name="Fujioka Y."/>
            <person name="Mizushima N."/>
            <person name="Ohsumi Y."/>
            <person name="Inagaki F."/>
        </authorList>
    </citation>
    <scope>X-RAY CRYSTALLOGRAPHY (1.9 ANGSTROMS) OF 1-353 IN COMPLEX WITH RAT MAP1LC3B/LC3</scope>
    <scope>FUNCTION</scope>
    <scope>CATALYTIC ACTIVITY</scope>
</reference>
<reference evidence="43 44" key="46">
    <citation type="journal article" date="2017" name="Autophagy">
        <title>ATG4B contains a C-terminal LIR motif important for binding and efficient cleavage of mammalian orthologs of yeast Atg8.</title>
        <authorList>
            <person name="Skytte Rasmussen M."/>
            <person name="Mouilleron S."/>
            <person name="Kumar Shrestha B."/>
            <person name="Wirth M."/>
            <person name="Lee R."/>
            <person name="Bowitz Larsen K."/>
            <person name="Abudu Princely Y."/>
            <person name="O'Reilly N."/>
            <person name="Sjottem E."/>
            <person name="Tooze S.A."/>
            <person name="Lamark T."/>
            <person name="Johansen T."/>
        </authorList>
    </citation>
    <scope>X-RAY CRYSTALLOGRAPHY (1.44 ANGSTROMS) OF 384-393 IN COMPLEX WITH GABARAPL1</scope>
    <scope>FUNCTION</scope>
    <scope>MOTIF</scope>
    <scope>DOMAIN</scope>
    <scope>MUTAGENESIS OF SER-383; 388-PHE--LEU-391 AND SER-392</scope>
</reference>
<evidence type="ECO:0000250" key="1">
    <source>
        <dbReference type="UniProtKB" id="Q8BGE6"/>
    </source>
</evidence>
<evidence type="ECO:0000255" key="2"/>
<evidence type="ECO:0000269" key="3">
    <source>
    </source>
</evidence>
<evidence type="ECO:0000269" key="4">
    <source>
    </source>
</evidence>
<evidence type="ECO:0000269" key="5">
    <source>
    </source>
</evidence>
<evidence type="ECO:0000269" key="6">
    <source>
    </source>
</evidence>
<evidence type="ECO:0000269" key="7">
    <source>
    </source>
</evidence>
<evidence type="ECO:0000269" key="8">
    <source>
    </source>
</evidence>
<evidence type="ECO:0000269" key="9">
    <source>
    </source>
</evidence>
<evidence type="ECO:0000269" key="10">
    <source>
    </source>
</evidence>
<evidence type="ECO:0000269" key="11">
    <source>
    </source>
</evidence>
<evidence type="ECO:0000269" key="12">
    <source>
    </source>
</evidence>
<evidence type="ECO:0000269" key="13">
    <source>
    </source>
</evidence>
<evidence type="ECO:0000269" key="14">
    <source>
    </source>
</evidence>
<evidence type="ECO:0000269" key="15">
    <source>
    </source>
</evidence>
<evidence type="ECO:0000269" key="16">
    <source>
    </source>
</evidence>
<evidence type="ECO:0000269" key="17">
    <source>
    </source>
</evidence>
<evidence type="ECO:0000269" key="18">
    <source>
    </source>
</evidence>
<evidence type="ECO:0000269" key="19">
    <source>
    </source>
</evidence>
<evidence type="ECO:0000269" key="20">
    <source>
    </source>
</evidence>
<evidence type="ECO:0000269" key="21">
    <source>
    </source>
</evidence>
<evidence type="ECO:0000269" key="22">
    <source>
    </source>
</evidence>
<evidence type="ECO:0000269" key="23">
    <source>
    </source>
</evidence>
<evidence type="ECO:0000269" key="24">
    <source>
    </source>
</evidence>
<evidence type="ECO:0000269" key="25">
    <source>
    </source>
</evidence>
<evidence type="ECO:0000269" key="26">
    <source>
    </source>
</evidence>
<evidence type="ECO:0000269" key="27">
    <source>
    </source>
</evidence>
<evidence type="ECO:0000269" key="28">
    <source>
    </source>
</evidence>
<evidence type="ECO:0000269" key="29">
    <source>
    </source>
</evidence>
<evidence type="ECO:0000269" key="30">
    <source>
    </source>
</evidence>
<evidence type="ECO:0000269" key="31">
    <source>
    </source>
</evidence>
<evidence type="ECO:0000269" key="32">
    <source>
    </source>
</evidence>
<evidence type="ECO:0000269" key="33">
    <source>
    </source>
</evidence>
<evidence type="ECO:0000269" key="34">
    <source ref="10"/>
</evidence>
<evidence type="ECO:0000303" key="35">
    <source>
    </source>
</evidence>
<evidence type="ECO:0000303" key="36">
    <source>
    </source>
</evidence>
<evidence type="ECO:0000303" key="37">
    <source>
    </source>
</evidence>
<evidence type="ECO:0000303" key="38">
    <source>
    </source>
</evidence>
<evidence type="ECO:0000303" key="39">
    <source>
    </source>
</evidence>
<evidence type="ECO:0000305" key="40"/>
<evidence type="ECO:0000305" key="41">
    <source>
    </source>
</evidence>
<evidence type="ECO:0000312" key="42">
    <source>
        <dbReference type="HGNC" id="HGNC:20790"/>
    </source>
</evidence>
<evidence type="ECO:0007744" key="43">
    <source>
        <dbReference type="PDB" id="5LXH"/>
    </source>
</evidence>
<evidence type="ECO:0007744" key="44">
    <source>
        <dbReference type="PDB" id="5LXI"/>
    </source>
</evidence>
<evidence type="ECO:0007744" key="45">
    <source>
    </source>
</evidence>
<evidence type="ECO:0007744" key="46">
    <source>
    </source>
</evidence>
<evidence type="ECO:0007744" key="47">
    <source>
    </source>
</evidence>
<evidence type="ECO:0007744" key="48">
    <source>
    </source>
</evidence>
<evidence type="ECO:0007744" key="49">
    <source>
    </source>
</evidence>
<evidence type="ECO:0007744" key="50">
    <source>
    </source>
</evidence>
<evidence type="ECO:0007744" key="51">
    <source>
    </source>
</evidence>
<evidence type="ECO:0007744" key="52">
    <source>
    </source>
</evidence>
<evidence type="ECO:0007744" key="53">
    <source>
    </source>
</evidence>
<evidence type="ECO:0007829" key="54">
    <source>
        <dbReference type="PDB" id="2CY7"/>
    </source>
</evidence>
<evidence type="ECO:0007829" key="55">
    <source>
        <dbReference type="PDB" id="2D1I"/>
    </source>
</evidence>
<evidence type="ECO:0007829" key="56">
    <source>
        <dbReference type="PDB" id="2Z0E"/>
    </source>
</evidence>
<evidence type="ECO:0007829" key="57">
    <source>
        <dbReference type="PDB" id="5LXH"/>
    </source>
</evidence>
<protein>
    <recommendedName>
        <fullName evidence="40">Cysteine protease ATG4B</fullName>
        <ecNumber evidence="14 15">3.4.22.-</ecNumber>
    </recommendedName>
    <alternativeName>
        <fullName>AUT-like 1 cysteine endopeptidase</fullName>
    </alternativeName>
    <alternativeName>
        <fullName evidence="36">Autophagy-related cysteine endopeptidase 1</fullName>
        <shortName evidence="36">Autophagin-1</shortName>
    </alternativeName>
    <alternativeName>
        <fullName evidence="38">Autophagy-related protein 4 homolog B</fullName>
        <shortName evidence="39">HsAPG4B</shortName>
        <shortName evidence="38">hAPG4B</shortName>
    </alternativeName>
</protein>
<dbReference type="EC" id="3.4.22.-" evidence="14 15"/>
<dbReference type="EMBL" id="AJ504652">
    <property type="protein sequence ID" value="CAD43219.1"/>
    <property type="molecule type" value="mRNA"/>
</dbReference>
<dbReference type="EMBL" id="AB066215">
    <property type="protein sequence ID" value="BAB83890.1"/>
    <property type="molecule type" value="mRNA"/>
</dbReference>
<dbReference type="EMBL" id="AB023160">
    <property type="protein sequence ID" value="BAA76787.2"/>
    <property type="status" value="ALT_INIT"/>
    <property type="molecule type" value="mRNA"/>
</dbReference>
<dbReference type="EMBL" id="AK027332">
    <property type="protein sequence ID" value="BAB55042.1"/>
    <property type="molecule type" value="mRNA"/>
</dbReference>
<dbReference type="EMBL" id="AK027462">
    <property type="protein sequence ID" value="BAB55127.1"/>
    <property type="molecule type" value="mRNA"/>
</dbReference>
<dbReference type="EMBL" id="AK027763">
    <property type="protein sequence ID" value="BAB55353.1"/>
    <property type="molecule type" value="mRNA"/>
</dbReference>
<dbReference type="EMBL" id="AK125277">
    <property type="protein sequence ID" value="BAC86110.1"/>
    <property type="status" value="ALT_INIT"/>
    <property type="molecule type" value="mRNA"/>
</dbReference>
<dbReference type="EMBL" id="AL080168">
    <property type="protein sequence ID" value="CAB45756.1"/>
    <property type="molecule type" value="mRNA"/>
</dbReference>
<dbReference type="EMBL" id="AC133528">
    <property type="protein sequence ID" value="AAY14919.1"/>
    <property type="molecule type" value="Genomic_DNA"/>
</dbReference>
<dbReference type="EMBL" id="BC000719">
    <property type="protein sequence ID" value="AAH00719.1"/>
    <property type="molecule type" value="mRNA"/>
</dbReference>
<dbReference type="CCDS" id="CCDS46564.1">
    <molecule id="Q9Y4P1-1"/>
</dbReference>
<dbReference type="CCDS" id="CCDS46565.1">
    <molecule id="Q9Y4P1-6"/>
</dbReference>
<dbReference type="PIR" id="T12492">
    <property type="entry name" value="T12492"/>
</dbReference>
<dbReference type="RefSeq" id="NP_037457.3">
    <molecule id="Q9Y4P1-1"/>
    <property type="nucleotide sequence ID" value="NM_013325.4"/>
</dbReference>
<dbReference type="RefSeq" id="NP_847896.1">
    <molecule id="Q9Y4P1-6"/>
    <property type="nucleotide sequence ID" value="NM_178326.3"/>
</dbReference>
<dbReference type="PDB" id="2CY7">
    <property type="method" value="X-ray"/>
    <property type="resolution" value="1.90 A"/>
    <property type="chains" value="A=1-393"/>
</dbReference>
<dbReference type="PDB" id="2D1I">
    <property type="method" value="X-ray"/>
    <property type="resolution" value="2.00 A"/>
    <property type="chains" value="A/B=1-393"/>
</dbReference>
<dbReference type="PDB" id="2Z0D">
    <property type="method" value="X-ray"/>
    <property type="resolution" value="1.90 A"/>
    <property type="chains" value="A=1-353"/>
</dbReference>
<dbReference type="PDB" id="2Z0E">
    <property type="method" value="X-ray"/>
    <property type="resolution" value="1.90 A"/>
    <property type="chains" value="A=1-353"/>
</dbReference>
<dbReference type="PDB" id="2ZZP">
    <property type="method" value="X-ray"/>
    <property type="resolution" value="2.05 A"/>
    <property type="chains" value="A=1-353"/>
</dbReference>
<dbReference type="PDB" id="5LXH">
    <property type="method" value="X-ray"/>
    <property type="resolution" value="1.58 A"/>
    <property type="chains" value="E/F/G=384-393"/>
</dbReference>
<dbReference type="PDB" id="5LXI">
    <property type="method" value="X-ray"/>
    <property type="resolution" value="1.44 A"/>
    <property type="chains" value="C/E=384-393"/>
</dbReference>
<dbReference type="PDBsum" id="2CY7"/>
<dbReference type="PDBsum" id="2D1I"/>
<dbReference type="PDBsum" id="2Z0D"/>
<dbReference type="PDBsum" id="2Z0E"/>
<dbReference type="PDBsum" id="2ZZP"/>
<dbReference type="PDBsum" id="5LXH"/>
<dbReference type="PDBsum" id="5LXI"/>
<dbReference type="SMR" id="Q9Y4P1"/>
<dbReference type="BioGRID" id="116801">
    <property type="interactions" value="128"/>
</dbReference>
<dbReference type="FunCoup" id="Q9Y4P1">
    <property type="interactions" value="1712"/>
</dbReference>
<dbReference type="IntAct" id="Q9Y4P1">
    <property type="interactions" value="111"/>
</dbReference>
<dbReference type="MINT" id="Q9Y4P1"/>
<dbReference type="STRING" id="9606.ENSP00000384259"/>
<dbReference type="BindingDB" id="Q9Y4P1"/>
<dbReference type="ChEMBL" id="CHEMBL1741221"/>
<dbReference type="MEROPS" id="C54.003"/>
<dbReference type="TCDB" id="9.A.15.2.1">
    <property type="family name" value="the autophagy-related phagophore-formation transporter (apt) family"/>
</dbReference>
<dbReference type="GlyGen" id="Q9Y4P1">
    <property type="glycosylation" value="3 sites, 1 O-linked glycan (1 site)"/>
</dbReference>
<dbReference type="iPTMnet" id="Q9Y4P1"/>
<dbReference type="PhosphoSitePlus" id="Q9Y4P1"/>
<dbReference type="SwissPalm" id="Q9Y4P1"/>
<dbReference type="BioMuta" id="ATG4B"/>
<dbReference type="DMDM" id="296434400"/>
<dbReference type="jPOST" id="Q9Y4P1"/>
<dbReference type="MassIVE" id="Q9Y4P1"/>
<dbReference type="PaxDb" id="9606-ENSP00000384259"/>
<dbReference type="PeptideAtlas" id="Q9Y4P1"/>
<dbReference type="ProteomicsDB" id="86230">
    <molecule id="Q9Y4P1-1"/>
</dbReference>
<dbReference type="ProteomicsDB" id="86231">
    <molecule id="Q9Y4P1-2"/>
</dbReference>
<dbReference type="ProteomicsDB" id="86232">
    <molecule id="Q9Y4P1-3"/>
</dbReference>
<dbReference type="ProteomicsDB" id="86233">
    <molecule id="Q9Y4P1-4"/>
</dbReference>
<dbReference type="ProteomicsDB" id="86234">
    <molecule id="Q9Y4P1-6"/>
</dbReference>
<dbReference type="Pumba" id="Q9Y4P1"/>
<dbReference type="Antibodypedia" id="12105">
    <property type="antibodies" value="683 antibodies from 41 providers"/>
</dbReference>
<dbReference type="DNASU" id="23192"/>
<dbReference type="Ensembl" id="ENST00000402096.5">
    <molecule id="Q9Y4P1-4"/>
    <property type="protein sequence ID" value="ENSP00000384661.1"/>
    <property type="gene ID" value="ENSG00000168397.17"/>
</dbReference>
<dbReference type="Ensembl" id="ENST00000404914.8">
    <molecule id="Q9Y4P1-1"/>
    <property type="protein sequence ID" value="ENSP00000384259.3"/>
    <property type="gene ID" value="ENSG00000168397.17"/>
</dbReference>
<dbReference type="Ensembl" id="ENST00000405546.7">
    <molecule id="Q9Y4P1-6"/>
    <property type="protein sequence ID" value="ENSP00000383964.3"/>
    <property type="gene ID" value="ENSG00000168397.17"/>
</dbReference>
<dbReference type="GeneID" id="23192"/>
<dbReference type="KEGG" id="hsa:23192"/>
<dbReference type="MANE-Select" id="ENST00000404914.8">
    <property type="protein sequence ID" value="ENSP00000384259.3"/>
    <property type="RefSeq nucleotide sequence ID" value="NM_013325.5"/>
    <property type="RefSeq protein sequence ID" value="NP_037457.3"/>
</dbReference>
<dbReference type="UCSC" id="uc002wbv.4">
    <molecule id="Q9Y4P1-1"/>
    <property type="organism name" value="human"/>
</dbReference>
<dbReference type="AGR" id="HGNC:20790"/>
<dbReference type="CTD" id="23192"/>
<dbReference type="DisGeNET" id="23192"/>
<dbReference type="GeneCards" id="ATG4B"/>
<dbReference type="HGNC" id="HGNC:20790">
    <property type="gene designation" value="ATG4B"/>
</dbReference>
<dbReference type="HPA" id="ENSG00000168397">
    <property type="expression patterns" value="Low tissue specificity"/>
</dbReference>
<dbReference type="MIM" id="611338">
    <property type="type" value="gene"/>
</dbReference>
<dbReference type="neXtProt" id="NX_Q9Y4P1"/>
<dbReference type="OpenTargets" id="ENSG00000168397"/>
<dbReference type="PharmGKB" id="PA134898340"/>
<dbReference type="VEuPathDB" id="HostDB:ENSG00000168397"/>
<dbReference type="eggNOG" id="KOG2674">
    <property type="taxonomic scope" value="Eukaryota"/>
</dbReference>
<dbReference type="GeneTree" id="ENSGT00530000063000"/>
<dbReference type="HOGENOM" id="CLU_021259_0_1_1"/>
<dbReference type="InParanoid" id="Q9Y4P1"/>
<dbReference type="OMA" id="PDETFHC"/>
<dbReference type="OrthoDB" id="2960936at2759"/>
<dbReference type="PAN-GO" id="Q9Y4P1">
    <property type="GO annotations" value="0 GO annotations based on evolutionary models"/>
</dbReference>
<dbReference type="PhylomeDB" id="Q9Y4P1"/>
<dbReference type="TreeFam" id="TF314847"/>
<dbReference type="PathwayCommons" id="Q9Y4P1"/>
<dbReference type="Reactome" id="R-HSA-1632852">
    <property type="pathway name" value="Macroautophagy"/>
</dbReference>
<dbReference type="SABIO-RK" id="Q9Y4P1"/>
<dbReference type="SignaLink" id="Q9Y4P1"/>
<dbReference type="SIGNOR" id="Q9Y4P1"/>
<dbReference type="BioGRID-ORCS" id="23192">
    <property type="hits" value="18 hits in 1166 CRISPR screens"/>
</dbReference>
<dbReference type="CD-CODE" id="BE404912">
    <property type="entry name" value="ATG4B condensate"/>
</dbReference>
<dbReference type="ChiTaRS" id="ATG4B">
    <property type="organism name" value="human"/>
</dbReference>
<dbReference type="EvolutionaryTrace" id="Q9Y4P1"/>
<dbReference type="GeneWiki" id="ATG4B"/>
<dbReference type="GenomeRNAi" id="23192"/>
<dbReference type="Pharos" id="Q9Y4P1">
    <property type="development level" value="Tchem"/>
</dbReference>
<dbReference type="PRO" id="PR:Q9Y4P1"/>
<dbReference type="Proteomes" id="UP000005640">
    <property type="component" value="Chromosome 2"/>
</dbReference>
<dbReference type="RNAct" id="Q9Y4P1">
    <property type="molecule type" value="protein"/>
</dbReference>
<dbReference type="Bgee" id="ENSG00000168397">
    <property type="expression patterns" value="Expressed in right hemisphere of cerebellum and 200 other cell types or tissues"/>
</dbReference>
<dbReference type="ExpressionAtlas" id="Q9Y4P1">
    <property type="expression patterns" value="baseline and differential"/>
</dbReference>
<dbReference type="GO" id="GO:0000421">
    <property type="term" value="C:autophagosome membrane"/>
    <property type="evidence" value="ECO:0000314"/>
    <property type="project" value="UniProt"/>
</dbReference>
<dbReference type="GO" id="GO:0005737">
    <property type="term" value="C:cytoplasm"/>
    <property type="evidence" value="ECO:0000318"/>
    <property type="project" value="GO_Central"/>
</dbReference>
<dbReference type="GO" id="GO:0031410">
    <property type="term" value="C:cytoplasmic vesicle"/>
    <property type="evidence" value="ECO:0007669"/>
    <property type="project" value="UniProtKB-KW"/>
</dbReference>
<dbReference type="GO" id="GO:0005829">
    <property type="term" value="C:cytosol"/>
    <property type="evidence" value="ECO:0000304"/>
    <property type="project" value="Reactome"/>
</dbReference>
<dbReference type="GO" id="GO:0005783">
    <property type="term" value="C:endoplasmic reticulum"/>
    <property type="evidence" value="ECO:0007669"/>
    <property type="project" value="UniProtKB-SubCell"/>
</dbReference>
<dbReference type="GO" id="GO:0005739">
    <property type="term" value="C:mitochondrion"/>
    <property type="evidence" value="ECO:0007669"/>
    <property type="project" value="UniProtKB-SubCell"/>
</dbReference>
<dbReference type="GO" id="GO:0004197">
    <property type="term" value="F:cysteine-type endopeptidase activity"/>
    <property type="evidence" value="ECO:0000314"/>
    <property type="project" value="UniProt"/>
</dbReference>
<dbReference type="GO" id="GO:0008234">
    <property type="term" value="F:cysteine-type peptidase activity"/>
    <property type="evidence" value="ECO:0000314"/>
    <property type="project" value="UniProtKB"/>
</dbReference>
<dbReference type="GO" id="GO:0004175">
    <property type="term" value="F:endopeptidase activity"/>
    <property type="evidence" value="ECO:0000314"/>
    <property type="project" value="BHF-UCL"/>
</dbReference>
<dbReference type="GO" id="GO:0019786">
    <property type="term" value="F:protein-phosphatidylethanolamide deconjugating activity"/>
    <property type="evidence" value="ECO:0000314"/>
    <property type="project" value="UniProtKB"/>
</dbReference>
<dbReference type="GO" id="GO:0097110">
    <property type="term" value="F:scaffold protein binding"/>
    <property type="evidence" value="ECO:0000353"/>
    <property type="project" value="ARUK-UCL"/>
</dbReference>
<dbReference type="GO" id="GO:0035973">
    <property type="term" value="P:aggrephagy"/>
    <property type="evidence" value="ECO:0000318"/>
    <property type="project" value="GO_Central"/>
</dbReference>
<dbReference type="GO" id="GO:0000045">
    <property type="term" value="P:autophagosome assembly"/>
    <property type="evidence" value="ECO:0000314"/>
    <property type="project" value="UniProt"/>
</dbReference>
<dbReference type="GO" id="GO:0006914">
    <property type="term" value="P:autophagy"/>
    <property type="evidence" value="ECO:0000314"/>
    <property type="project" value="UniProtKB"/>
</dbReference>
<dbReference type="GO" id="GO:0016236">
    <property type="term" value="P:macroautophagy"/>
    <property type="evidence" value="ECO:0000304"/>
    <property type="project" value="Reactome"/>
</dbReference>
<dbReference type="GO" id="GO:0016237">
    <property type="term" value="P:microautophagy"/>
    <property type="evidence" value="ECO:0000314"/>
    <property type="project" value="UniProtKB"/>
</dbReference>
<dbReference type="GO" id="GO:0000423">
    <property type="term" value="P:mitophagy"/>
    <property type="evidence" value="ECO:0000315"/>
    <property type="project" value="UniProtKB"/>
</dbReference>
<dbReference type="GO" id="GO:0031173">
    <property type="term" value="P:otolith mineralization completed early in development"/>
    <property type="evidence" value="ECO:0000250"/>
    <property type="project" value="UniProtKB"/>
</dbReference>
<dbReference type="GO" id="GO:0034727">
    <property type="term" value="P:piecemeal microautophagy of the nucleus"/>
    <property type="evidence" value="ECO:0000318"/>
    <property type="project" value="GO_Central"/>
</dbReference>
<dbReference type="GO" id="GO:0051697">
    <property type="term" value="P:protein delipidation"/>
    <property type="evidence" value="ECO:0000314"/>
    <property type="project" value="UniProtKB"/>
</dbReference>
<dbReference type="GO" id="GO:0034497">
    <property type="term" value="P:protein localization to phagophore assembly site"/>
    <property type="evidence" value="ECO:0000315"/>
    <property type="project" value="UniProtKB"/>
</dbReference>
<dbReference type="GO" id="GO:0016485">
    <property type="term" value="P:protein processing"/>
    <property type="evidence" value="ECO:0000318"/>
    <property type="project" value="GO_Central"/>
</dbReference>
<dbReference type="GO" id="GO:0015031">
    <property type="term" value="P:protein transport"/>
    <property type="evidence" value="ECO:0007669"/>
    <property type="project" value="UniProtKB-KW"/>
</dbReference>
<dbReference type="GO" id="GO:0006508">
    <property type="term" value="P:proteolysis"/>
    <property type="evidence" value="ECO:0000314"/>
    <property type="project" value="UniProtKB"/>
</dbReference>
<dbReference type="DisProt" id="DP01326"/>
<dbReference type="IDEAL" id="IID00347"/>
<dbReference type="InterPro" id="IPR046793">
    <property type="entry name" value="ATG4_LIR"/>
</dbReference>
<dbReference type="InterPro" id="IPR038765">
    <property type="entry name" value="Papain-like_cys_pep_sf"/>
</dbReference>
<dbReference type="InterPro" id="IPR005078">
    <property type="entry name" value="Peptidase_C54"/>
</dbReference>
<dbReference type="InterPro" id="IPR046792">
    <property type="entry name" value="Peptidase_C54_cat"/>
</dbReference>
<dbReference type="PANTHER" id="PTHR22624">
    <property type="entry name" value="CYSTEINE PROTEASE ATG4"/>
    <property type="match status" value="1"/>
</dbReference>
<dbReference type="PANTHER" id="PTHR22624:SF39">
    <property type="entry name" value="CYSTEINE PROTEASE ATG4B"/>
    <property type="match status" value="1"/>
</dbReference>
<dbReference type="Pfam" id="PF20166">
    <property type="entry name" value="ATG4_LIR"/>
    <property type="match status" value="1"/>
</dbReference>
<dbReference type="Pfam" id="PF03416">
    <property type="entry name" value="Peptidase_C54"/>
    <property type="match status" value="1"/>
</dbReference>
<dbReference type="SUPFAM" id="SSF54001">
    <property type="entry name" value="Cysteine proteinases"/>
    <property type="match status" value="1"/>
</dbReference>
<keyword id="KW-0002">3D-structure</keyword>
<keyword id="KW-0007">Acetylation</keyword>
<keyword id="KW-0025">Alternative splicing</keyword>
<keyword id="KW-0072">Autophagy</keyword>
<keyword id="KW-0963">Cytoplasm</keyword>
<keyword id="KW-0968">Cytoplasmic vesicle</keyword>
<keyword id="KW-0903">Direct protein sequencing</keyword>
<keyword id="KW-1015">Disulfide bond</keyword>
<keyword id="KW-0256">Endoplasmic reticulum</keyword>
<keyword id="KW-0325">Glycoprotein</keyword>
<keyword id="KW-0378">Hydrolase</keyword>
<keyword id="KW-1017">Isopeptide bond</keyword>
<keyword id="KW-0496">Mitochondrion</keyword>
<keyword id="KW-0597">Phosphoprotein</keyword>
<keyword id="KW-0645">Protease</keyword>
<keyword id="KW-0653">Protein transport</keyword>
<keyword id="KW-1267">Proteomics identification</keyword>
<keyword id="KW-1185">Reference proteome</keyword>
<keyword id="KW-0702">S-nitrosylation</keyword>
<keyword id="KW-0788">Thiol protease</keyword>
<keyword id="KW-0813">Transport</keyword>
<keyword id="KW-0832">Ubl conjugation</keyword>
<keyword id="KW-0833">Ubl conjugation pathway</keyword>
<comment type="function">
    <text evidence="5 6 10 12 13 14 15 17 18 19 20 21 23 24 25 26 27 28 30 32 33">Cysteine protease that plays a key role in autophagy by mediating both proteolytic activation and delipidation of ATG8 family proteins (PubMed:15169837, PubMed:15187094, PubMed:17347651, PubMed:19322194, PubMed:21177865, PubMed:22302004, PubMed:26378241, PubMed:27527864, PubMed:28633005, PubMed:28821708, PubMed:29232556, PubMed:30076329, PubMed:30443548, PubMed:30661429). Required for canonical autophagy (macroautophagy), non-canonical autophagy as well as for mitophagy (PubMed:33773106, PubMed:33909989). The protease activity is required for proteolytic activation of ATG8 family proteins: cleaves the C-terminal amino acid of ATG8 proteins MAP1LC3A, MAP1LC3B, MAP1LC3C, GABARAPL1, GABARAPL2 and GABARAP, to reveal a C-terminal glycine (PubMed:15169837, PubMed:15187094, PubMed:17347651, PubMed:19322194, PubMed:20818167, PubMed:21177865, PubMed:22302004, PubMed:27527864, PubMed:28287329, PubMed:28633005, PubMed:29458288, PubMed:30661429). Exposure of the glycine at the C-terminus is essential for ATG8 proteins conjugation to phosphatidylethanolamine (PE) and insertion to membranes, which is necessary for autophagy (PubMed:15169837, PubMed:15187094, PubMed:17347651, PubMed:19322194, PubMed:21177865, PubMed:22302004). Protease activity is also required to counteract formation of high-molecular weight conjugates of ATG8 proteins (ATG8ylation): acts as a deubiquitinating-like enzyme that removes ATG8 conjugated to other proteins, such as ATG3 (PubMed:31315929, PubMed:33773106). In addition to the protease activity, also mediates delipidation of ATG8 family proteins (PubMed:15187094, PubMed:19322194, PubMed:28633005, PubMed:29458288, PubMed:32686895, PubMed:33909989). Catalyzes delipidation of PE-conjugated forms of ATG8 proteins during macroautophagy (PubMed:15187094, PubMed:19322194, PubMed:29458288, PubMed:32686895, PubMed:33909989). Also involved in non-canonical autophagy, a parallel pathway involving conjugation of ATG8 proteins to single membranes at endolysosomal compartments, by catalyzing delipidation of ATG8 proteins conjugated to phosphatidylserine (PS) (PubMed:33909989). Compared to other members of the family (ATG4A, ATG4C or ATG4C), constitutes the major protein for proteolytic activation of ATG8 proteins, while it displays weaker delipidation activity than other ATG4 paralogs (PubMed:29458288, PubMed:30661429). Involved in phagophore growth during mitophagy independently of its protease activity and of ATG8 proteins: acts by regulating ATG9A trafficking to mitochondria and promoting phagophore-endoplasmic reticulum contacts during the lipid transfer phase of mitophagy (PubMed:33773106).</text>
</comment>
<comment type="catalytic activity">
    <reaction evidence="6 12 24 30 33">
        <text>[protein]-C-terminal L-amino acid-glycyl-phosphatidylethanolamide + H2O = [protein]-C-terminal L-amino acid-glycine + a 1,2-diacyl-sn-glycero-3-phosphoethanolamine</text>
        <dbReference type="Rhea" id="RHEA:67548"/>
        <dbReference type="Rhea" id="RHEA-COMP:17323"/>
        <dbReference type="Rhea" id="RHEA-COMP:17324"/>
        <dbReference type="ChEBI" id="CHEBI:15377"/>
        <dbReference type="ChEBI" id="CHEBI:64612"/>
        <dbReference type="ChEBI" id="CHEBI:172940"/>
        <dbReference type="ChEBI" id="CHEBI:172941"/>
    </reaction>
    <physiologicalReaction direction="left-to-right" evidence="6 12 24 30 33">
        <dbReference type="Rhea" id="RHEA:67549"/>
    </physiologicalReaction>
</comment>
<comment type="catalytic activity">
    <reaction evidence="33">
        <text>[protein]-C-terminal L-amino acid-glycyl-phosphatidylserine + H2O = [protein]-C-terminal L-amino acid-glycine + a 1,2-diacyl-sn-glycero-3-phospho-L-serine</text>
        <dbReference type="Rhea" id="RHEA:67576"/>
        <dbReference type="Rhea" id="RHEA-COMP:17324"/>
        <dbReference type="Rhea" id="RHEA-COMP:17326"/>
        <dbReference type="ChEBI" id="CHEBI:15377"/>
        <dbReference type="ChEBI" id="CHEBI:57262"/>
        <dbReference type="ChEBI" id="CHEBI:172940"/>
        <dbReference type="ChEBI" id="CHEBI:172942"/>
    </reaction>
    <physiologicalReaction direction="left-to-right" evidence="33">
        <dbReference type="Rhea" id="RHEA:67577"/>
    </physiologicalReaction>
</comment>
<comment type="activity regulation">
    <text evidence="10 14 25">Inhibited by N-ethylmaleimide (PubMed:21177865). Redox-regulated during autophagy since reducing conditions activate ATG4A whereas an oxidizing environment such as the presence of H(2)O(2) inhibits its activity (PubMed:17347651). The cysteine protease activity compounds is inhibited by styrylquinoline compounds 4-28 and LV-320 (PubMed:30076329).</text>
</comment>
<comment type="biophysicochemical properties">
    <kinetics>
        <KM evidence="14 15">5.1 uM for MAP1LC3B</KM>
        <KM evidence="14 15">5.8 uM for GABARAP</KM>
        <KM evidence="14 15">4.4 uM for GABARAPL1</KM>
        <KM evidence="14 15">6.1 uM for GABARAPL2</KM>
    </kinetics>
</comment>
<comment type="subunit">
    <text evidence="1 31">Interacts with PFKP; promoting phosphorylation of ATG4B at Ser-34 (PubMed:33607258). Interacts with GBP7 (By similarity).</text>
</comment>
<comment type="interaction">
    <interactant intactId="EBI-712014">
        <id>Q9Y4P1</id>
    </interactant>
    <interactant intactId="EBI-712001">
        <id>O95166</id>
        <label>GABARAP</label>
    </interactant>
    <organismsDiffer>false</organismsDiffer>
    <experiments>9</experiments>
</comment>
<comment type="interaction">
    <interactant intactId="EBI-712014">
        <id>Q9Y4P1</id>
    </interactant>
    <interactant intactId="EBI-746969">
        <id>Q9H0R8</id>
        <label>GABARAPL1</label>
    </interactant>
    <organismsDiffer>false</organismsDiffer>
    <experiments>12</experiments>
</comment>
<comment type="interaction">
    <interactant intactId="EBI-712014">
        <id>Q9Y4P1</id>
    </interactant>
    <interactant intactId="EBI-720116">
        <id>P60520</id>
        <label>GABARAPL2</label>
    </interactant>
    <organismsDiffer>false</organismsDiffer>
    <experiments>12</experiments>
</comment>
<comment type="interaction">
    <interactant intactId="EBI-712014">
        <id>Q9Y4P1</id>
    </interactant>
    <interactant intactId="EBI-720768">
        <id>Q9H492</id>
        <label>MAP1LC3A</label>
    </interactant>
    <organismsDiffer>false</organismsDiffer>
    <experiments>6</experiments>
</comment>
<comment type="interaction">
    <interactant intactId="EBI-712014">
        <id>Q9Y4P1</id>
    </interactant>
    <interactant intactId="EBI-373144">
        <id>Q9GZQ8</id>
        <label>MAP1LC3B</label>
    </interactant>
    <organismsDiffer>false</organismsDiffer>
    <experiments>15</experiments>
</comment>
<comment type="interaction">
    <interactant intactId="EBI-712014">
        <id>Q9Y4P1</id>
    </interactant>
    <interactant intactId="EBI-2603996">
        <id>Q9BXW4</id>
        <label>MAP1LC3C</label>
    </interactant>
    <organismsDiffer>false</organismsDiffer>
    <experiments>4</experiments>
</comment>
<comment type="interaction">
    <interactant intactId="EBI-712014">
        <id>Q9Y4P1</id>
    </interactant>
    <interactant intactId="EBI-25401874">
        <id>A0A0H3LAC5</id>
        <label>ERDMAN_2289</label>
    </interactant>
    <organismsDiffer>true</organismsDiffer>
    <experiments>2</experiments>
</comment>
<comment type="subcellular location">
    <subcellularLocation>
        <location evidence="22">Cytoplasm</location>
    </subcellularLocation>
    <subcellularLocation>
        <location evidence="22">Cytoplasm</location>
        <location evidence="22">Cytosol</location>
    </subcellularLocation>
    <subcellularLocation>
        <location evidence="22">Cytoplasmic vesicle</location>
        <location evidence="22">Autophagosome</location>
    </subcellularLocation>
    <subcellularLocation>
        <location evidence="22">Endoplasmic reticulum</location>
    </subcellularLocation>
    <subcellularLocation>
        <location evidence="22">Mitochondrion</location>
    </subcellularLocation>
    <text evidence="22">Mainly localizes to the cytoplasm, including cytosol (PubMed:29165041). A samll potion localizes to mitochondria; phosphorylation at Ser-34 promotes localization to mitochondria (PubMed:29165041).</text>
</comment>
<comment type="alternative products">
    <event type="alternative splicing"/>
    <isoform>
        <id>Q9Y4P1-1</id>
        <name>1</name>
        <sequence type="displayed"/>
    </isoform>
    <isoform>
        <id>Q9Y4P1-2</id>
        <name>2</name>
        <sequence type="described" ref="VSP_013029 VSP_013034"/>
    </isoform>
    <isoform>
        <id>Q9Y4P1-3</id>
        <name>3</name>
        <sequence type="described" ref="VSP_013028 VSP_013031 VSP_013032"/>
    </isoform>
    <isoform>
        <id>Q9Y4P1-4</id>
        <name>4</name>
        <sequence type="described" ref="VSP_013028 VSP_013033"/>
    </isoform>
    <isoform>
        <id>Q9Y4P1-6</id>
        <name>6</name>
        <sequence type="described" ref="VSP_013034"/>
    </isoform>
</comment>
<comment type="domain">
    <text evidence="19 24">The LIR motif (LC3-interacting region) is required for the interaction with ATG8 family proteins MAP1LC3A, MAP1LC3B, MAP1LC3C and GABARAPL1 (PubMed:28287329). Required for proteolytic activation and delipidation of ATG8 proteins (PubMed:28287329, PubMed:29458288).</text>
</comment>
<comment type="PTM">
    <text evidence="17 21 22 26">Phosphorylation at Ser-383 and Ser-392 promotes autophagy by increasing protein delipidation activity without affecting proteolytic activation of ATG8 proteins (PubMed:26378241). Phosphorylation at Ser-316 by ULK1 inhibits autophagy by decreasing both proteolytic activation and delipidation activities (PubMed:28821708). Phosphorylation at Ser-316 is dephosphorylated by protein phosphatase 2A (PP2A) (PubMed:28821708). Phosphorylation at Ser-34 by AKT2 promotes its hydrolase activity, leading to increased proteolytic activation and delipidation of ATG8 family proteins (PubMed:30443548). Phosphorylation at Ser-34 by AKT1 promotes mitochondrial localization and inhibition of the F1F0-ATP synthase activity, leading to elevation of mitochondrial reactive oxygen species (ROS) (PubMed:29165041).</text>
</comment>
<comment type="PTM">
    <text evidence="16">Ubiquitinated by RNF5, leading to its degradation by the proteasome.</text>
</comment>
<comment type="PTM">
    <text evidence="20">S-nitrosylation at Cys-189 and Cys-292 in response to high glucose decreases both proteolytic activation and delipidation activities.</text>
</comment>
<comment type="PTM">
    <text evidence="18">O-glycosylated by OGT, leading to increase protease activity, thereby promoting the proteolytic activation of ATG8 family proteins.</text>
</comment>
<comment type="PTM">
    <text evidence="29">Forms reversible intrachain disulfide bonds in response to oxidative stress (PubMed:31880198). Forms interchain disulfide bonds, leading to formation of homooligomers in response to oxidation (PubMed:31880198).</text>
</comment>
<comment type="similarity">
    <text evidence="40">Belongs to the peptidase C54 family.</text>
</comment>
<comment type="caution">
    <text evidence="4 41">A paper describing ATG4B tissue expression has been retracted, due to concerns of image duplication in some of the figures.</text>
</comment>
<comment type="sequence caution" evidence="40">
    <conflict type="erroneous initiation">
        <sequence resource="EMBL-CDS" id="BAA76787"/>
    </conflict>
    <text>Extended N-terminus.</text>
</comment>
<comment type="sequence caution" evidence="40">
    <conflict type="erroneous initiation">
        <sequence resource="EMBL-CDS" id="BAC86110"/>
    </conflict>
    <text>Extended N-terminus.</text>
</comment>
<sequence length="393" mass="44294">MDAATLTYDTLRFAEFEDFPETSEPVWILGRKYSIFTEKDEILSDVASRLWFTYRKNFPAIGGTGPTSDTGWGCMLRCGQMIFAQALVCRHLGRDWRWTQRKRQPDSYFSVLNAFIDRKDSYYSIHQIAQMGVGEGKSIGQWYGPNTVAQVLKKLAVFDTWSSLAVHIAMDNTVVMEEIRRLCRTSVPCAGATAFPADSDRHCNGFPAGAEVTNRPSPWRPLVLLIPLRLGLTDINEAYVETLKHCFMMPQSLGVIGGKPNSAHYFIGYVGEELIYLDPHTTQPAVEPTDGCFIPDESFHCQHPPCRMSIAELDPSIAVGFFCKTEDDFNDWCQQVKKLSLLGGALPMFELVELQPSHLACPDVLNLSLDSSDVERLERFFDSEDEDFEILSL</sequence>
<name>ATG4B_HUMAN</name>
<organism>
    <name type="scientific">Homo sapiens</name>
    <name type="common">Human</name>
    <dbReference type="NCBI Taxonomy" id="9606"/>
    <lineage>
        <taxon>Eukaryota</taxon>
        <taxon>Metazoa</taxon>
        <taxon>Chordata</taxon>
        <taxon>Craniata</taxon>
        <taxon>Vertebrata</taxon>
        <taxon>Euteleostomi</taxon>
        <taxon>Mammalia</taxon>
        <taxon>Eutheria</taxon>
        <taxon>Euarchontoglires</taxon>
        <taxon>Primates</taxon>
        <taxon>Haplorrhini</taxon>
        <taxon>Catarrhini</taxon>
        <taxon>Hominidae</taxon>
        <taxon>Homo</taxon>
    </lineage>
</organism>
<feature type="chain" id="PRO_0000215844" description="Cysteine protease ATG4B">
    <location>
        <begin position="1"/>
        <end position="393"/>
    </location>
</feature>
<feature type="short sequence motif" description="LIR" evidence="19">
    <location>
        <begin position="388"/>
        <end position="391"/>
    </location>
</feature>
<feature type="active site" description="Nucleophile" evidence="5 6 8 9 13 17 21 26">
    <location>
        <position position="74"/>
    </location>
</feature>
<feature type="active site" evidence="2 8 9">
    <location>
        <position position="278"/>
    </location>
</feature>
<feature type="active site" evidence="8 9">
    <location>
        <position position="280"/>
    </location>
</feature>
<feature type="modified residue" description="N-acetylmethionine" evidence="34 47 51 52">
    <location>
        <position position="1"/>
    </location>
</feature>
<feature type="modified residue" description="Phosphoserine; by PKB/AKT1 and PKB/AKT2" evidence="22 26 31">
    <location>
        <position position="34"/>
    </location>
</feature>
<feature type="modified residue" description="S-nitrosocysteine" evidence="20">
    <location>
        <position position="189"/>
    </location>
</feature>
<feature type="modified residue" description="S-nitrosocysteine" evidence="20">
    <location>
        <position position="292"/>
    </location>
</feature>
<feature type="modified residue" description="S-nitrosocysteine" evidence="20">
    <location>
        <position position="301"/>
    </location>
</feature>
<feature type="modified residue" description="Phosphoserine; by ULK1" evidence="21">
    <location>
        <position position="316"/>
    </location>
</feature>
<feature type="modified residue" description="Phosphoserine; by STK26" evidence="17 23 45 46 48 49 50 53">
    <location>
        <position position="383"/>
    </location>
</feature>
<feature type="modified residue" description="Phosphoserine" evidence="17">
    <location>
        <position position="392"/>
    </location>
</feature>
<feature type="disulfide bond" evidence="29">
    <location>
        <begin position="292"/>
        <end position="361"/>
    </location>
</feature>
<feature type="disulfide bond" description="Interchain (with C-361)" evidence="29">
    <location>
        <position position="292"/>
    </location>
</feature>
<feature type="disulfide bond" description="Interchain (with C-292)" evidence="29">
    <location>
        <position position="361"/>
    </location>
</feature>
<feature type="splice variant" id="VSP_013028" description="In isoform 3 and isoform 4." evidence="37">
    <location>
        <begin position="1"/>
        <end position="74"/>
    </location>
</feature>
<feature type="splice variant" id="VSP_013029" description="In isoform 2." evidence="37">
    <original>M</original>
    <variation>MAHSVPSDSRTSRRPTTRPHAARGAPRGSRRPGRTPKWRLPRISARAPYRLRRLRRHTYWPPRRPVAASRCWPVGATPLGSVGGRTGKM</variation>
    <location>
        <position position="1"/>
    </location>
</feature>
<feature type="splice variant" id="VSP_013031" description="In isoform 3." evidence="37">
    <original>FFCKTEDDFNDWCQQVKKLSLLGGALPMFELVEL</original>
    <variation>KQGRLVRSLIPWAPRPSSWCAAVLGAAVVMCGTP</variation>
    <location>
        <begin position="321"/>
        <end position="354"/>
    </location>
</feature>
<feature type="splice variant" id="VSP_013032" description="In isoform 3." evidence="37">
    <location>
        <begin position="355"/>
        <end position="393"/>
    </location>
</feature>
<feature type="splice variant" id="VSP_013033" description="In isoform 4." evidence="37">
    <original>L</original>
    <variation>LGESCQVQVGSLG</variation>
    <location>
        <position position="369"/>
    </location>
</feature>
<feature type="splice variant" id="VSP_013034" description="In isoform 2 and isoform 6." evidence="37">
    <original>DSSDVERLERFFDSEDEDFEILSL</original>
    <variation>GESCQVQILLM</variation>
    <location>
        <begin position="370"/>
        <end position="393"/>
    </location>
</feature>
<feature type="sequence variant" id="VAR_021486" description="In dbSNP:rs7601000." evidence="3 5 7 11">
    <original>L</original>
    <variation>Q</variation>
    <location>
        <position position="354"/>
    </location>
</feature>
<feature type="mutagenesis site" description="Decreased phosphorylation by AKT2, leading to reduced proteolytic activation of ATG8 family proteins." evidence="26">
    <original>S</original>
    <variation>A</variation>
    <location>
        <position position="34"/>
    </location>
</feature>
<feature type="mutagenesis site" description="Phospho-mimetic mutant; increased proteolytic activation of ATG8 family proteins." evidence="26">
    <original>S</original>
    <variation>D</variation>
    <location>
        <position position="34"/>
    </location>
</feature>
<feature type="mutagenesis site" description="Complete loss of protease activity." evidence="5 6 8 9 13 17 21 26">
    <original>C</original>
    <variation>S</variation>
    <location>
        <position position="74"/>
    </location>
</feature>
<feature type="mutagenesis site" description="Reduces the redox sensitivity and retains activity in presence of H(2)O(2)." evidence="10">
    <original>C</original>
    <variation>A</variation>
    <location>
        <position position="78"/>
    </location>
</feature>
<feature type="mutagenesis site" description="Does not affect formation of disulfide bonds." evidence="29">
    <original>C</original>
    <variation>S</variation>
    <location>
        <position position="78"/>
    </location>
</feature>
<feature type="mutagenesis site" description="Does not affect formation of disulfide bonds." evidence="29">
    <original>C</original>
    <variation>S</variation>
    <location>
        <position position="89"/>
    </location>
</feature>
<feature type="mutagenesis site" description="Decreased phosphorylation by AKT2; when associated with A-262." evidence="26">
    <original>S</original>
    <variation>A</variation>
    <location>
        <position position="121"/>
    </location>
</feature>
<feature type="mutagenesis site" description="Strongly reduced protease activity." evidence="8">
    <original>W</original>
    <variation>A</variation>
    <location>
        <position position="142"/>
    </location>
</feature>
<feature type="mutagenesis site" description="Does not affect formation of disulfide bonds." evidence="29">
    <original>C</original>
    <variation>S</variation>
    <location>
        <position position="183"/>
    </location>
</feature>
<feature type="mutagenesis site" description="Does not affect S-nitrosylation. Strongly decreased S-nitrosylation, leading to increased hydrolase activity and autophagic flux; when associated with S-292. Does not affect formation of disulfide bonds." evidence="20 29">
    <original>C</original>
    <variation>S</variation>
    <location>
        <position position="189"/>
    </location>
</feature>
<feature type="mutagenesis site" description="Does not affect formation of disulfide bonds." evidence="29">
    <original>C</original>
    <variation>S</variation>
    <location>
        <position position="203"/>
    </location>
</feature>
<feature type="mutagenesis site" description="Strongly reduced protease activity." evidence="8">
    <original>R</original>
    <variation>A</variation>
    <location>
        <position position="229"/>
    </location>
</feature>
<feature type="mutagenesis site" description="Does not affect formation of disulfide bonds." evidence="29">
    <original>C</original>
    <variation>S</variation>
    <location>
        <position position="246"/>
    </location>
</feature>
<feature type="mutagenesis site" description="Decreased phosphorylation by AKT2; when associated with A-121." evidence="26">
    <original>S</original>
    <variation>A</variation>
    <location>
        <position position="262"/>
    </location>
</feature>
<feature type="mutagenesis site" description="Complete loss of protease activity." evidence="8 9">
    <original>D</original>
    <variation>A</variation>
    <location>
        <position position="278"/>
    </location>
</feature>
<feature type="mutagenesis site" description="Complete loss of protease activity." evidence="8 9">
    <original>H</original>
    <variation>A</variation>
    <location>
        <position position="280"/>
    </location>
</feature>
<feature type="mutagenesis site" description="Does not affect S-nitrosylation. Strongly decreased S-nitrosylation, leading to increased hydrolase activity and autophagic flux; when associated with S-189. Reduced formation of intrachain and interchain disulfide bonds in response to oxidation. Abolished formation of disulfide bonds, leading to increased autophagy; when associated with S-361." evidence="20 29">
    <original>C</original>
    <variation>S</variation>
    <location>
        <position position="292"/>
    </location>
</feature>
<feature type="mutagenesis site" description="Does not affect S-nitrosylation. Does not affect formation of disulfide bonds." evidence="20 29">
    <original>C</original>
    <variation>S</variation>
    <location>
        <position position="301"/>
    </location>
</feature>
<feature type="mutagenesis site" description="Does not affect formation of disulfide bonds." evidence="29">
    <original>C</original>
    <variation>S</variation>
    <location>
        <position position="306"/>
    </location>
</feature>
<feature type="mutagenesis site" description="Abolished phosphorylation by ULK1; promotes hydrolase activity, leading to increased proteolytic activation and delipidation of ATG8 family proteins." evidence="21">
    <original>S</original>
    <variation>A</variation>
    <location>
        <position position="316"/>
    </location>
</feature>
<feature type="mutagenesis site" description="Phospho-mimetic mutant; reduced hydrolase activity, leading to decreased proteolytic activation and delipidation of ATG8 family proteins." evidence="21">
    <original>S</original>
    <variation>D</variation>
    <location>
        <position position="316"/>
    </location>
</feature>
<feature type="mutagenesis site" description="Does not affect formation of disulfide bonds." evidence="29">
    <original>C</original>
    <variation>S</variation>
    <location>
        <position position="323"/>
    </location>
</feature>
<feature type="mutagenesis site" description="Does not affect formation of disulfide bonds." evidence="29">
    <original>C</original>
    <variation>S</variation>
    <location>
        <position position="333"/>
    </location>
</feature>
<feature type="mutagenesis site" description="Reduced formation of intrachain and interchain disulfide bonds in response to oxidation. Abolished formation of disulfide bonds, leading to increased autophagy; when associated with S-292." evidence="29">
    <original>C</original>
    <variation>S</variation>
    <location>
        <position position="361"/>
    </location>
</feature>
<feature type="mutagenesis site" description="Decreased phosphorylation, leading to decreased hydrolase activity and autophagic flux. Does not affect interaction with ATG8 family proteins." evidence="17 19 23">
    <original>S</original>
    <variation>A</variation>
    <location>
        <position position="383"/>
    </location>
</feature>
<feature type="mutagenesis site" description="Phospho-mimetic mutant; does not affect interaction with ATG8 family proteins." evidence="19">
    <original>S</original>
    <variation>E</variation>
    <location>
        <position position="383"/>
    </location>
</feature>
<feature type="mutagenesis site" description="In 2mLIR; decreased interaction with ATG8 family proteins MAP1LC3A, MAP1LC3B and MAP1LC3C. Decreased ability to mediate delipidation of ATG8 proteins conjugated to phosphatidylethanolamine (PE)." evidence="19 24">
    <original>FEIL</original>
    <variation>AEIA</variation>
    <location>
        <begin position="388"/>
        <end position="391"/>
    </location>
</feature>
<feature type="mutagenesis site" description="Decreased phosphorylation, leading to decreased hydrolase activity and autophagic flux. Does not affect interaction with ATG8 family proteins." evidence="17 19">
    <original>S</original>
    <variation>A</variation>
    <location>
        <position position="392"/>
    </location>
</feature>
<feature type="mutagenesis site" description="Phospho-mimetic mutant; slightly increased interaction with ATG8 family proteins." evidence="19">
    <original>S</original>
    <variation>E</variation>
    <location>
        <position position="392"/>
    </location>
</feature>
<feature type="sequence conflict" description="In Ref. 3; BAB83890." evidence="40" ref="3">
    <location>
        <position position="136"/>
    </location>
</feature>
<feature type="sequence conflict" description="In Ref. 6; BAB55127." evidence="40" ref="6">
    <original>P</original>
    <variation>L</variation>
    <location>
        <position position="188"/>
    </location>
</feature>
<feature type="sequence conflict" description="In Ref. 6; BAB55353." evidence="40" ref="6">
    <original>F</original>
    <variation>Y</variation>
    <location>
        <position position="247"/>
    </location>
</feature>
<feature type="sequence conflict" description="In Ref. 6; BAB55042." evidence="40" ref="6">
    <original>E</original>
    <variation>G</variation>
    <location>
        <position position="273"/>
    </location>
</feature>
<feature type="sequence conflict" description="In Ref. 3; BAB83890." evidence="40" ref="3">
    <original>E</original>
    <variation>N</variation>
    <location>
        <position position="312"/>
    </location>
</feature>
<feature type="helix" evidence="56">
    <location>
        <begin position="5"/>
        <end position="7"/>
    </location>
</feature>
<feature type="helix" evidence="54">
    <location>
        <begin position="10"/>
        <end position="13"/>
    </location>
</feature>
<feature type="helix" evidence="56">
    <location>
        <begin position="14"/>
        <end position="18"/>
    </location>
</feature>
<feature type="strand" evidence="55">
    <location>
        <begin position="22"/>
        <end position="24"/>
    </location>
</feature>
<feature type="strand" evidence="54">
    <location>
        <begin position="26"/>
        <end position="28"/>
    </location>
</feature>
<feature type="strand" evidence="54">
    <location>
        <begin position="31"/>
        <end position="33"/>
    </location>
</feature>
<feature type="turn" evidence="54">
    <location>
        <begin position="35"/>
        <end position="37"/>
    </location>
</feature>
<feature type="helix" evidence="54">
    <location>
        <begin position="39"/>
        <end position="48"/>
    </location>
</feature>
<feature type="strand" evidence="54">
    <location>
        <begin position="54"/>
        <end position="57"/>
    </location>
</feature>
<feature type="turn" evidence="54">
    <location>
        <begin position="61"/>
        <end position="64"/>
    </location>
</feature>
<feature type="turn" evidence="54">
    <location>
        <begin position="70"/>
        <end position="72"/>
    </location>
</feature>
<feature type="helix" evidence="54">
    <location>
        <begin position="74"/>
        <end position="91"/>
    </location>
</feature>
<feature type="strand" evidence="56">
    <location>
        <begin position="100"/>
        <end position="102"/>
    </location>
</feature>
<feature type="helix" evidence="54">
    <location>
        <begin position="106"/>
        <end position="113"/>
    </location>
</feature>
<feature type="strand" evidence="54">
    <location>
        <begin position="116"/>
        <end position="118"/>
    </location>
</feature>
<feature type="helix" evidence="54">
    <location>
        <begin position="125"/>
        <end position="133"/>
    </location>
</feature>
<feature type="turn" evidence="54">
    <location>
        <begin position="134"/>
        <end position="136"/>
    </location>
</feature>
<feature type="helix" evidence="54">
    <location>
        <begin position="145"/>
        <end position="156"/>
    </location>
</feature>
<feature type="turn" evidence="54">
    <location>
        <begin position="160"/>
        <end position="162"/>
    </location>
</feature>
<feature type="strand" evidence="54">
    <location>
        <begin position="165"/>
        <end position="168"/>
    </location>
</feature>
<feature type="strand" evidence="54">
    <location>
        <begin position="173"/>
        <end position="175"/>
    </location>
</feature>
<feature type="helix" evidence="54">
    <location>
        <begin position="176"/>
        <end position="183"/>
    </location>
</feature>
<feature type="strand" evidence="54">
    <location>
        <begin position="184"/>
        <end position="186"/>
    </location>
</feature>
<feature type="strand" evidence="54">
    <location>
        <begin position="222"/>
        <end position="229"/>
    </location>
</feature>
<feature type="strand" evidence="54">
    <location>
        <begin position="232"/>
        <end position="234"/>
    </location>
</feature>
<feature type="helix" evidence="54">
    <location>
        <begin position="237"/>
        <end position="239"/>
    </location>
</feature>
<feature type="helix" evidence="54">
    <location>
        <begin position="240"/>
        <end position="246"/>
    </location>
</feature>
<feature type="strand" evidence="54">
    <location>
        <begin position="252"/>
        <end position="257"/>
    </location>
</feature>
<feature type="strand" evidence="54">
    <location>
        <begin position="264"/>
        <end position="270"/>
    </location>
</feature>
<feature type="strand" evidence="54">
    <location>
        <begin position="273"/>
        <end position="277"/>
    </location>
</feature>
<feature type="strand" evidence="54">
    <location>
        <begin position="281"/>
        <end position="284"/>
    </location>
</feature>
<feature type="strand" evidence="55">
    <location>
        <begin position="290"/>
        <end position="292"/>
    </location>
</feature>
<feature type="helix" evidence="54">
    <location>
        <begin position="297"/>
        <end position="299"/>
    </location>
</feature>
<feature type="strand" evidence="54">
    <location>
        <begin position="306"/>
        <end position="309"/>
    </location>
</feature>
<feature type="helix" evidence="54">
    <location>
        <begin position="310"/>
        <end position="312"/>
    </location>
</feature>
<feature type="strand" evidence="54">
    <location>
        <begin position="315"/>
        <end position="325"/>
    </location>
</feature>
<feature type="helix" evidence="54">
    <location>
        <begin position="326"/>
        <end position="341"/>
    </location>
</feature>
<feature type="strand" evidence="54">
    <location>
        <begin position="349"/>
        <end position="353"/>
    </location>
</feature>
<feature type="helix" evidence="54">
    <location>
        <begin position="371"/>
        <end position="376"/>
    </location>
</feature>
<feature type="strand" evidence="57">
    <location>
        <begin position="388"/>
        <end position="390"/>
    </location>
</feature>